<name>NSD2_HUMAN</name>
<keyword id="KW-0002">3D-structure</keyword>
<keyword id="KW-0025">Alternative splicing</keyword>
<keyword id="KW-0156">Chromatin regulator</keyword>
<keyword id="KW-0160">Chromosomal rearrangement</keyword>
<keyword id="KW-0158">Chromosome</keyword>
<keyword id="KW-0963">Cytoplasm</keyword>
<keyword id="KW-0225">Disease variant</keyword>
<keyword id="KW-0238">DNA-binding</keyword>
<keyword id="KW-0991">Intellectual disability</keyword>
<keyword id="KW-0479">Metal-binding</keyword>
<keyword id="KW-0489">Methyltransferase</keyword>
<keyword id="KW-0539">Nucleus</keyword>
<keyword id="KW-0597">Phosphoprotein</keyword>
<keyword id="KW-1267">Proteomics identification</keyword>
<keyword id="KW-0656">Proto-oncogene</keyword>
<keyword id="KW-1185">Reference proteome</keyword>
<keyword id="KW-0677">Repeat</keyword>
<keyword id="KW-0949">S-adenosyl-L-methionine</keyword>
<keyword id="KW-0804">Transcription</keyword>
<keyword id="KW-0805">Transcription regulation</keyword>
<keyword id="KW-0808">Transferase</keyword>
<keyword id="KW-0862">Zinc</keyword>
<keyword id="KW-0863">Zinc-finger</keyword>
<protein>
    <recommendedName>
        <fullName>Histone-lysine N-methyltransferase NSD2</fullName>
        <ecNumber evidence="19 20 21 22">2.1.1.357</ecNumber>
    </recommendedName>
    <alternativeName>
        <fullName evidence="34">Multiple myeloma SET domain-containing protein</fullName>
        <shortName evidence="34">MMSET</shortName>
    </alternativeName>
    <alternativeName>
        <fullName>Nuclear SET domain-containing protein 2</fullName>
    </alternativeName>
    <alternativeName>
        <fullName>Protein trithorax-5</fullName>
    </alternativeName>
    <alternativeName>
        <fullName>Wolf-Hirschhorn syndrome candidate 1 protein</fullName>
    </alternativeName>
</protein>
<gene>
    <name evidence="36" type="primary">NSD2</name>
    <name type="synonym">KIAA1090</name>
    <name type="synonym">MMSET</name>
    <name type="synonym">TRX5</name>
    <name type="synonym">WHSC1</name>
</gene>
<reference key="1">
    <citation type="journal article" date="1998" name="Blood">
        <title>The t(4;14) translocation in myeloma dysregulates both FGFR3 and a novel gene, MMSET, resulting in IgH/MMSET hybrid transcripts.</title>
        <authorList>
            <person name="Chesi M."/>
            <person name="Nardini E."/>
            <person name="Lim R.S.C."/>
            <person name="Smith K.D."/>
            <person name="Kuehl W.M."/>
            <person name="Bergsagel P.L."/>
        </authorList>
    </citation>
    <scope>NUCLEOTIDE SEQUENCE [MRNA] (ISOFORMS 1 AND 3)</scope>
    <scope>TISSUE SPECIFICITY</scope>
    <scope>CHROMOSOMAL TRANSLOCATION WITH IGH</scope>
    <source>
        <tissue>Myeloma</tissue>
    </source>
</reference>
<reference key="2">
    <citation type="journal article" date="1998" name="Hum. Mol. Genet.">
        <title>WHSC1, a 90 kb SET domain-containing gene, expressed in early development and homologous to a Drosophila dysmorphy gene maps in the Wolf-Hirschhorn syndrome critical region and is fused to IgH in t(4;14) multiple myeloma.</title>
        <authorList>
            <person name="Stec I."/>
            <person name="Wright T.J."/>
            <person name="van Ommen G.-J.B."/>
            <person name="de Boer P.A."/>
            <person name="van Haeringen A."/>
            <person name="Moorman A.F.M."/>
            <person name="Altherr M.R."/>
            <person name="den Dunnen J.T."/>
        </authorList>
    </citation>
    <scope>NUCLEOTIDE SEQUENCE [GENOMIC DNA / MRNA] (ISOFORMS 1; 3 AND 5)</scope>
    <scope>TISSUE SPECIFICITY</scope>
    <scope>CHROMOSOMAL TRANSLOCATION WITH IGH</scope>
</reference>
<reference key="3">
    <citation type="journal article" date="1998" name="Hum. Mol. Genet.">
        <authorList>
            <person name="Stec I."/>
            <person name="Wright T.J."/>
            <person name="van Ommen G.-J.B."/>
            <person name="de Boer P.A."/>
            <person name="van Haeringen A."/>
            <person name="Moorman A.F.M."/>
            <person name="Altherr M.R."/>
            <person name="den Dunnen J.T."/>
        </authorList>
    </citation>
    <scope>ERRATUM OF PUBMED:9618163</scope>
</reference>
<reference key="4">
    <citation type="journal article" date="2001" name="Am. J. Respir. Cell Mol. Biol.">
        <title>A unique mRNA initiated within a middle intron of WHSC1/MMSET encodes a DNA binding protein that suppresses human IL-5 transcription.</title>
        <authorList>
            <person name="Garlisi C.G."/>
            <person name="Uss A.S."/>
            <person name="Xiao H."/>
            <person name="Tian F."/>
            <person name="Sheridan K.E."/>
            <person name="Wang L."/>
            <person name="Motasim Billah M."/>
            <person name="Egan R.W."/>
            <person name="Stranick K.S."/>
            <person name="Umland S.P."/>
        </authorList>
    </citation>
    <scope>NUCLEOTIDE SEQUENCE [MRNA] (ISOFORM 4)</scope>
    <scope>FUNCTION</scope>
    <scope>DNA-BINDING</scope>
</reference>
<reference key="5">
    <citation type="journal article" date="2005" name="Blood">
        <title>Overexpression of transcripts originating from the MMSET locus characterizes all t(4;14)(p16;q32)-positive multiple myeloma patients.</title>
        <authorList>
            <person name="Keats J.J."/>
            <person name="Maxwell C.A."/>
            <person name="Taylor B.J."/>
            <person name="Hendzel M.J."/>
            <person name="Chesi M."/>
            <person name="Bergsagel P.L."/>
            <person name="Larratt L.M."/>
            <person name="Mant M.J."/>
            <person name="Reiman T."/>
            <person name="Belch A.R."/>
            <person name="Pilarski L.M."/>
        </authorList>
    </citation>
    <scope>NUCLEOTIDE SEQUENCE [MRNA] (ISOFORM 7)</scope>
    <scope>SUBCELLULAR LOCATION</scope>
</reference>
<reference key="6">
    <citation type="submission" date="1998-06" db="EMBL/GenBank/DDBJ databases">
        <title>Mammalian trithorax- and ASH1-like proteins: putative chromatin regulators which contain PHD fingers and SET domains.</title>
        <authorList>
            <person name="Angrand P.-O."/>
            <person name="Valvatne H."/>
            <person name="Jeanmougin F."/>
            <person name="Adamson A."/>
            <person name="van der Hoeven F."/>
            <person name="Olsen L."/>
            <person name="Tekotte H."/>
            <person name="Huang N."/>
            <person name="Poch O."/>
            <person name="Lamerdin J."/>
            <person name="Chambon P."/>
            <person name="Losson R."/>
            <person name="Stewart A."/>
            <person name="Aasland R."/>
        </authorList>
    </citation>
    <scope>NUCLEOTIDE SEQUENCE [MRNA] (ISOFORM 1)</scope>
</reference>
<reference key="7">
    <citation type="journal article" date="1999" name="DNA Res.">
        <title>Prediction of the coding sequences of unidentified human genes. XIV. The complete sequences of 100 new cDNA clones from brain which code for large proteins in vitro.</title>
        <authorList>
            <person name="Kikuno R."/>
            <person name="Nagase T."/>
            <person name="Ishikawa K."/>
            <person name="Hirosawa M."/>
            <person name="Miyajima N."/>
            <person name="Tanaka A."/>
            <person name="Kotani H."/>
            <person name="Nomura N."/>
            <person name="Ohara O."/>
        </authorList>
    </citation>
    <scope>NUCLEOTIDE SEQUENCE [LARGE SCALE MRNA] (ISOFORM 2)</scope>
    <source>
        <tissue>Brain</tissue>
    </source>
</reference>
<reference key="8">
    <citation type="journal article" date="2004" name="Nat. Genet.">
        <title>Complete sequencing and characterization of 21,243 full-length human cDNAs.</title>
        <authorList>
            <person name="Ota T."/>
            <person name="Suzuki Y."/>
            <person name="Nishikawa T."/>
            <person name="Otsuki T."/>
            <person name="Sugiyama T."/>
            <person name="Irie R."/>
            <person name="Wakamatsu A."/>
            <person name="Hayashi K."/>
            <person name="Sato H."/>
            <person name="Nagai K."/>
            <person name="Kimura K."/>
            <person name="Makita H."/>
            <person name="Sekine M."/>
            <person name="Obayashi M."/>
            <person name="Nishi T."/>
            <person name="Shibahara T."/>
            <person name="Tanaka T."/>
            <person name="Ishii S."/>
            <person name="Yamamoto J."/>
            <person name="Saito K."/>
            <person name="Kawai Y."/>
            <person name="Isono Y."/>
            <person name="Nakamura Y."/>
            <person name="Nagahari K."/>
            <person name="Murakami K."/>
            <person name="Yasuda T."/>
            <person name="Iwayanagi T."/>
            <person name="Wagatsuma M."/>
            <person name="Shiratori A."/>
            <person name="Sudo H."/>
            <person name="Hosoiri T."/>
            <person name="Kaku Y."/>
            <person name="Kodaira H."/>
            <person name="Kondo H."/>
            <person name="Sugawara M."/>
            <person name="Takahashi M."/>
            <person name="Kanda K."/>
            <person name="Yokoi T."/>
            <person name="Furuya T."/>
            <person name="Kikkawa E."/>
            <person name="Omura Y."/>
            <person name="Abe K."/>
            <person name="Kamihara K."/>
            <person name="Katsuta N."/>
            <person name="Sato K."/>
            <person name="Tanikawa M."/>
            <person name="Yamazaki M."/>
            <person name="Ninomiya K."/>
            <person name="Ishibashi T."/>
            <person name="Yamashita H."/>
            <person name="Murakawa K."/>
            <person name="Fujimori K."/>
            <person name="Tanai H."/>
            <person name="Kimata M."/>
            <person name="Watanabe M."/>
            <person name="Hiraoka S."/>
            <person name="Chiba Y."/>
            <person name="Ishida S."/>
            <person name="Ono Y."/>
            <person name="Takiguchi S."/>
            <person name="Watanabe S."/>
            <person name="Yosida M."/>
            <person name="Hotuta T."/>
            <person name="Kusano J."/>
            <person name="Kanehori K."/>
            <person name="Takahashi-Fujii A."/>
            <person name="Hara H."/>
            <person name="Tanase T.-O."/>
            <person name="Nomura Y."/>
            <person name="Togiya S."/>
            <person name="Komai F."/>
            <person name="Hara R."/>
            <person name="Takeuchi K."/>
            <person name="Arita M."/>
            <person name="Imose N."/>
            <person name="Musashino K."/>
            <person name="Yuuki H."/>
            <person name="Oshima A."/>
            <person name="Sasaki N."/>
            <person name="Aotsuka S."/>
            <person name="Yoshikawa Y."/>
            <person name="Matsunawa H."/>
            <person name="Ichihara T."/>
            <person name="Shiohata N."/>
            <person name="Sano S."/>
            <person name="Moriya S."/>
            <person name="Momiyama H."/>
            <person name="Satoh N."/>
            <person name="Takami S."/>
            <person name="Terashima Y."/>
            <person name="Suzuki O."/>
            <person name="Nakagawa S."/>
            <person name="Senoh A."/>
            <person name="Mizoguchi H."/>
            <person name="Goto Y."/>
            <person name="Shimizu F."/>
            <person name="Wakebe H."/>
            <person name="Hishigaki H."/>
            <person name="Watanabe T."/>
            <person name="Sugiyama A."/>
            <person name="Takemoto M."/>
            <person name="Kawakami B."/>
            <person name="Yamazaki M."/>
            <person name="Watanabe K."/>
            <person name="Kumagai A."/>
            <person name="Itakura S."/>
            <person name="Fukuzumi Y."/>
            <person name="Fujimori Y."/>
            <person name="Komiyama M."/>
            <person name="Tashiro H."/>
            <person name="Tanigami A."/>
            <person name="Fujiwara T."/>
            <person name="Ono T."/>
            <person name="Yamada K."/>
            <person name="Fujii Y."/>
            <person name="Ozaki K."/>
            <person name="Hirao M."/>
            <person name="Ohmori Y."/>
            <person name="Kawabata A."/>
            <person name="Hikiji T."/>
            <person name="Kobatake N."/>
            <person name="Inagaki H."/>
            <person name="Ikema Y."/>
            <person name="Okamoto S."/>
            <person name="Okitani R."/>
            <person name="Kawakami T."/>
            <person name="Noguchi S."/>
            <person name="Itoh T."/>
            <person name="Shigeta K."/>
            <person name="Senba T."/>
            <person name="Matsumura K."/>
            <person name="Nakajima Y."/>
            <person name="Mizuno T."/>
            <person name="Morinaga M."/>
            <person name="Sasaki M."/>
            <person name="Togashi T."/>
            <person name="Oyama M."/>
            <person name="Hata H."/>
            <person name="Watanabe M."/>
            <person name="Komatsu T."/>
            <person name="Mizushima-Sugano J."/>
            <person name="Satoh T."/>
            <person name="Shirai Y."/>
            <person name="Takahashi Y."/>
            <person name="Nakagawa K."/>
            <person name="Okumura K."/>
            <person name="Nagase T."/>
            <person name="Nomura N."/>
            <person name="Kikuchi H."/>
            <person name="Masuho Y."/>
            <person name="Yamashita R."/>
            <person name="Nakai K."/>
            <person name="Yada T."/>
            <person name="Nakamura Y."/>
            <person name="Ohara O."/>
            <person name="Isogai T."/>
            <person name="Sugano S."/>
        </authorList>
    </citation>
    <scope>NUCLEOTIDE SEQUENCE [LARGE SCALE MRNA] (ISOFORM 3)</scope>
    <source>
        <tissue>Amygdala</tissue>
    </source>
</reference>
<reference key="9">
    <citation type="journal article" date="2005" name="Nature">
        <title>Generation and annotation of the DNA sequences of human chromosomes 2 and 4.</title>
        <authorList>
            <person name="Hillier L.W."/>
            <person name="Graves T.A."/>
            <person name="Fulton R.S."/>
            <person name="Fulton L.A."/>
            <person name="Pepin K.H."/>
            <person name="Minx P."/>
            <person name="Wagner-McPherson C."/>
            <person name="Layman D."/>
            <person name="Wylie K."/>
            <person name="Sekhon M."/>
            <person name="Becker M.C."/>
            <person name="Fewell G.A."/>
            <person name="Delehaunty K.D."/>
            <person name="Miner T.L."/>
            <person name="Nash W.E."/>
            <person name="Kremitzki C."/>
            <person name="Oddy L."/>
            <person name="Du H."/>
            <person name="Sun H."/>
            <person name="Bradshaw-Cordum H."/>
            <person name="Ali J."/>
            <person name="Carter J."/>
            <person name="Cordes M."/>
            <person name="Harris A."/>
            <person name="Isak A."/>
            <person name="van Brunt A."/>
            <person name="Nguyen C."/>
            <person name="Du F."/>
            <person name="Courtney L."/>
            <person name="Kalicki J."/>
            <person name="Ozersky P."/>
            <person name="Abbott S."/>
            <person name="Armstrong J."/>
            <person name="Belter E.A."/>
            <person name="Caruso L."/>
            <person name="Cedroni M."/>
            <person name="Cotton M."/>
            <person name="Davidson T."/>
            <person name="Desai A."/>
            <person name="Elliott G."/>
            <person name="Erb T."/>
            <person name="Fronick C."/>
            <person name="Gaige T."/>
            <person name="Haakenson W."/>
            <person name="Haglund K."/>
            <person name="Holmes A."/>
            <person name="Harkins R."/>
            <person name="Kim K."/>
            <person name="Kruchowski S.S."/>
            <person name="Strong C.M."/>
            <person name="Grewal N."/>
            <person name="Goyea E."/>
            <person name="Hou S."/>
            <person name="Levy A."/>
            <person name="Martinka S."/>
            <person name="Mead K."/>
            <person name="McLellan M.D."/>
            <person name="Meyer R."/>
            <person name="Randall-Maher J."/>
            <person name="Tomlinson C."/>
            <person name="Dauphin-Kohlberg S."/>
            <person name="Kozlowicz-Reilly A."/>
            <person name="Shah N."/>
            <person name="Swearengen-Shahid S."/>
            <person name="Snider J."/>
            <person name="Strong J.T."/>
            <person name="Thompson J."/>
            <person name="Yoakum M."/>
            <person name="Leonard S."/>
            <person name="Pearman C."/>
            <person name="Trani L."/>
            <person name="Radionenko M."/>
            <person name="Waligorski J.E."/>
            <person name="Wang C."/>
            <person name="Rock S.M."/>
            <person name="Tin-Wollam A.-M."/>
            <person name="Maupin R."/>
            <person name="Latreille P."/>
            <person name="Wendl M.C."/>
            <person name="Yang S.-P."/>
            <person name="Pohl C."/>
            <person name="Wallis J.W."/>
            <person name="Spieth J."/>
            <person name="Bieri T.A."/>
            <person name="Berkowicz N."/>
            <person name="Nelson J.O."/>
            <person name="Osborne J."/>
            <person name="Ding L."/>
            <person name="Meyer R."/>
            <person name="Sabo A."/>
            <person name="Shotland Y."/>
            <person name="Sinha P."/>
            <person name="Wohldmann P.E."/>
            <person name="Cook L.L."/>
            <person name="Hickenbotham M.T."/>
            <person name="Eldred J."/>
            <person name="Williams D."/>
            <person name="Jones T.A."/>
            <person name="She X."/>
            <person name="Ciccarelli F.D."/>
            <person name="Izaurralde E."/>
            <person name="Taylor J."/>
            <person name="Schmutz J."/>
            <person name="Myers R.M."/>
            <person name="Cox D.R."/>
            <person name="Huang X."/>
            <person name="McPherson J.D."/>
            <person name="Mardis E.R."/>
            <person name="Clifton S.W."/>
            <person name="Warren W.C."/>
            <person name="Chinwalla A.T."/>
            <person name="Eddy S.R."/>
            <person name="Marra M.A."/>
            <person name="Ovcharenko I."/>
            <person name="Furey T.S."/>
            <person name="Miller W."/>
            <person name="Eichler E.E."/>
            <person name="Bork P."/>
            <person name="Suyama M."/>
            <person name="Torrents D."/>
            <person name="Waterston R.H."/>
            <person name="Wilson R.K."/>
        </authorList>
    </citation>
    <scope>NUCLEOTIDE SEQUENCE [LARGE SCALE GENOMIC DNA]</scope>
</reference>
<reference key="10">
    <citation type="submission" date="2005-09" db="EMBL/GenBank/DDBJ databases">
        <authorList>
            <person name="Mural R.J."/>
            <person name="Istrail S."/>
            <person name="Sutton G.G."/>
            <person name="Florea L."/>
            <person name="Halpern A.L."/>
            <person name="Mobarry C.M."/>
            <person name="Lippert R."/>
            <person name="Walenz B."/>
            <person name="Shatkay H."/>
            <person name="Dew I."/>
            <person name="Miller J.R."/>
            <person name="Flanigan M.J."/>
            <person name="Edwards N.J."/>
            <person name="Bolanos R."/>
            <person name="Fasulo D."/>
            <person name="Halldorsson B.V."/>
            <person name="Hannenhalli S."/>
            <person name="Turner R."/>
            <person name="Yooseph S."/>
            <person name="Lu F."/>
            <person name="Nusskern D.R."/>
            <person name="Shue B.C."/>
            <person name="Zheng X.H."/>
            <person name="Zhong F."/>
            <person name="Delcher A.L."/>
            <person name="Huson D.H."/>
            <person name="Kravitz S.A."/>
            <person name="Mouchard L."/>
            <person name="Reinert K."/>
            <person name="Remington K.A."/>
            <person name="Clark A.G."/>
            <person name="Waterman M.S."/>
            <person name="Eichler E.E."/>
            <person name="Adams M.D."/>
            <person name="Hunkapiller M.W."/>
            <person name="Myers E.W."/>
            <person name="Venter J.C."/>
        </authorList>
    </citation>
    <scope>NUCLEOTIDE SEQUENCE [LARGE SCALE GENOMIC DNA]</scope>
</reference>
<reference key="11">
    <citation type="journal article" date="2004" name="Genome Res.">
        <title>The status, quality, and expansion of the NIH full-length cDNA project: the Mammalian Gene Collection (MGC).</title>
        <authorList>
            <consortium name="The MGC Project Team"/>
        </authorList>
    </citation>
    <scope>NUCLEOTIDE SEQUENCE [LARGE SCALE MRNA] (ISOFORMS 2; 3; 4 AND 6)</scope>
    <source>
        <tissue>Ovary</tissue>
        <tissue>Spleen</tissue>
    </source>
</reference>
<reference key="12">
    <citation type="journal article" date="2000" name="Cancer Res.">
        <title>Detection of t(4;14)(p16.3;q32) chromosomal translocation in multiple myeloma by reverse transcription-polymerase chain reaction analysis of IGH-MMSET fusion transcripts.</title>
        <authorList>
            <person name="Malgeri U."/>
            <person name="Baldini L."/>
            <person name="Perfetti V."/>
            <person name="Fabris S."/>
            <person name="Vignarelli M.C."/>
            <person name="Colombo G."/>
            <person name="Lotti V."/>
            <person name="Compasso S."/>
            <person name="Bogni S."/>
            <person name="Lombardi L."/>
            <person name="Maiolo A.T."/>
            <person name="Neri A."/>
        </authorList>
    </citation>
    <scope>CHROMOSOMAL TRANSLOCATION WITH IGH</scope>
</reference>
<reference key="13">
    <citation type="journal article" date="2001" name="Am. J. Pathol.">
        <title>Translocation T(4;14)(p16.3;q32) is a recurrent genetic lesion in primary amyloidosis.</title>
        <authorList>
            <person name="Perfetti V."/>
            <person name="Coluccia A.M."/>
            <person name="Intini D."/>
            <person name="Malgeri U."/>
            <person name="Vignarelli M.C."/>
            <person name="Casarini S."/>
            <person name="Merlini G."/>
            <person name="Neri A."/>
        </authorList>
    </citation>
    <scope>CHROMOSOMAL TRANSLOCATION WITH IGH</scope>
</reference>
<reference key="14">
    <citation type="journal article" date="2003" name="Blood">
        <title>A subset of multiple myeloma harboring the t(4;14)(p16;q32) translocation lacks FGFR3 expression but maintains an IGH/MMSET fusion transcript.</title>
        <authorList>
            <person name="Santra M."/>
            <person name="Zhan F."/>
            <person name="Tian E."/>
            <person name="Barlogie B."/>
            <person name="Shaughnessy J. Jr."/>
        </authorList>
    </citation>
    <scope>CHROMOSOMAL TRANSLOCATION WITH IGH</scope>
</reference>
<reference key="15">
    <citation type="journal article" date="2004" name="Br. J. Haematol.">
        <title>Identification of a novel IGH-MMSET fusion transcript in a human myeloma cell line with the t(4;14)(p16.3;q32) chromosomal translocation.</title>
        <authorList>
            <person name="Intini D."/>
            <person name="Fabris S."/>
            <person name="Storlazzi T."/>
            <person name="Otsuki T."/>
            <person name="Ciceri G."/>
            <person name="Verdelli D."/>
            <person name="Lombardi L."/>
            <person name="Rocchi M."/>
            <person name="Neri A."/>
        </authorList>
    </citation>
    <scope>CHROMOSOMAL TRANSLOCATION WITH IGH</scope>
</reference>
<reference key="16">
    <citation type="journal article" date="2005" name="Br. J. Haematol.">
        <title>Identification of ID-1 as a potential target gene of MMSET in multiple myeloma.</title>
        <authorList>
            <person name="Hudlebusch H.R."/>
            <person name="Theilgaard-Moench K."/>
            <person name="Lodahl M."/>
            <person name="Johnsen H.E."/>
            <person name="Rasmussen T."/>
        </authorList>
    </citation>
    <scope>FUNCTION</scope>
</reference>
<reference key="17">
    <citation type="journal article" date="2005" name="Br. J. Haematol.">
        <title>Transcription repression activity is associated with the type I isoform of the MMSET gene involved in t(4;14) in multiple myeloma.</title>
        <authorList>
            <person name="Todoerti K."/>
            <person name="Ronchetti D."/>
            <person name="Agnelli L."/>
            <person name="Castellani S."/>
            <person name="Marelli S."/>
            <person name="Deliliers G.L."/>
            <person name="Zanella A."/>
            <person name="Lombardi L."/>
            <person name="Neri A."/>
        </authorList>
    </citation>
    <scope>SUBCELLULAR LOCATION</scope>
</reference>
<reference key="18">
    <citation type="journal article" date="2005" name="Trends Genet.">
        <title>The etiology of Wolf-Hirschhorn syndrome.</title>
        <authorList>
            <person name="Bergemann A.D."/>
            <person name="Cole F."/>
            <person name="Hirschhorn K."/>
        </authorList>
    </citation>
    <scope>INVOLVEMENT IN WHS</scope>
</reference>
<reference key="19">
    <citation type="journal article" date="2006" name="Cell">
        <title>Global, in vivo, and site-specific phosphorylation dynamics in signaling networks.</title>
        <authorList>
            <person name="Olsen J.V."/>
            <person name="Blagoev B."/>
            <person name="Gnad F."/>
            <person name="Macek B."/>
            <person name="Kumar C."/>
            <person name="Mortensen P."/>
            <person name="Mann M."/>
        </authorList>
    </citation>
    <scope>PHOSPHORYLATION [LARGE SCALE ANALYSIS] AT THR-544</scope>
    <scope>IDENTIFICATION BY MASS SPECTROMETRY [LARGE SCALE ANALYSIS]</scope>
    <source>
        <tissue>Cervix carcinoma</tissue>
    </source>
</reference>
<reference key="20">
    <citation type="journal article" date="2008" name="Mol. Cell. Biol.">
        <title>Multiple-myeloma-related WHSC1/MMSET isoform RE-IIBP is a histone methyltransferase with transcriptional repression activity.</title>
        <authorList>
            <person name="Kim J.Y."/>
            <person name="Kee H.J."/>
            <person name="Choe N.W."/>
            <person name="Kim S.M."/>
            <person name="Eom G.H."/>
            <person name="Baek H.J."/>
            <person name="Kook H."/>
            <person name="Kook H."/>
            <person name="Seo S.B."/>
        </authorList>
    </citation>
    <scope>FUNCTION</scope>
    <scope>TISSUE SPECIFICITY</scope>
</reference>
<reference key="21">
    <citation type="journal article" date="2008" name="Proc. Natl. Acad. Sci. U.S.A.">
        <title>A quantitative atlas of mitotic phosphorylation.</title>
        <authorList>
            <person name="Dephoure N."/>
            <person name="Zhou C."/>
            <person name="Villen J."/>
            <person name="Beausoleil S.A."/>
            <person name="Bakalarski C.E."/>
            <person name="Elledge S.J."/>
            <person name="Gygi S.P."/>
        </authorList>
    </citation>
    <scope>PHOSPHORYLATION [LARGE SCALE ANALYSIS] AT SER-121 AND THR-544</scope>
    <scope>IDENTIFICATION BY MASS SPECTROMETRY [LARGE SCALE ANALYSIS]</scope>
    <source>
        <tissue>Cervix carcinoma</tissue>
    </source>
</reference>
<reference key="22">
    <citation type="journal article" date="2009" name="Anal. Chem.">
        <title>Lys-N and trypsin cover complementary parts of the phosphoproteome in a refined SCX-based approach.</title>
        <authorList>
            <person name="Gauci S."/>
            <person name="Helbig A.O."/>
            <person name="Slijper M."/>
            <person name="Krijgsveld J."/>
            <person name="Heck A.J."/>
            <person name="Mohammed S."/>
        </authorList>
    </citation>
    <scope>IDENTIFICATION BY MASS SPECTROMETRY [LARGE SCALE ANALYSIS]</scope>
</reference>
<reference key="23">
    <citation type="journal article" date="2009" name="J. Biol. Chem.">
        <title>The target of the NSD family of histone lysine methyltransferases depends on the nature of the substrate.</title>
        <authorList>
            <person name="Li Y."/>
            <person name="Trojer P."/>
            <person name="Xu C.F."/>
            <person name="Cheung P."/>
            <person name="Kuo A."/>
            <person name="Drury W.J. III"/>
            <person name="Qiao Q."/>
            <person name="Neubert T.A."/>
            <person name="Xu R.M."/>
            <person name="Gozani O."/>
            <person name="Reinberg D."/>
        </authorList>
    </citation>
    <scope>FUNCTION</scope>
    <scope>CATALYTIC ACTIVITY</scope>
</reference>
<reference key="24">
    <citation type="journal article" date="2009" name="Sci. Signal.">
        <title>Quantitative phosphoproteomic analysis of T cell receptor signaling reveals system-wide modulation of protein-protein interactions.</title>
        <authorList>
            <person name="Mayya V."/>
            <person name="Lundgren D.H."/>
            <person name="Hwang S.-I."/>
            <person name="Rezaul K."/>
            <person name="Wu L."/>
            <person name="Eng J.K."/>
            <person name="Rodionov V."/>
            <person name="Han D.K."/>
        </authorList>
    </citation>
    <scope>PHOSPHORYLATION [LARGE SCALE ANALYSIS] AT THR-110; THR-114; SER-121; SER-376 AND THR-544</scope>
    <scope>IDENTIFICATION BY MASS SPECTROMETRY [LARGE SCALE ANALYSIS]</scope>
    <source>
        <tissue>Leukemic T-cell</tissue>
    </source>
</reference>
<reference key="25">
    <citation type="journal article" date="2010" name="Sci. Signal.">
        <title>Quantitative phosphoproteomics reveals widespread full phosphorylation site occupancy during mitosis.</title>
        <authorList>
            <person name="Olsen J.V."/>
            <person name="Vermeulen M."/>
            <person name="Santamaria A."/>
            <person name="Kumar C."/>
            <person name="Miller M.L."/>
            <person name="Jensen L.J."/>
            <person name="Gnad F."/>
            <person name="Cox J."/>
            <person name="Jensen T.S."/>
            <person name="Nigg E.A."/>
            <person name="Brunak S."/>
            <person name="Mann M."/>
        </authorList>
    </citation>
    <scope>PHOSPHORYLATION [LARGE SCALE ANALYSIS] AT THR-544</scope>
    <scope>IDENTIFICATION BY MASS SPECTROMETRY [LARGE SCALE ANALYSIS]</scope>
    <source>
        <tissue>Cervix carcinoma</tissue>
    </source>
</reference>
<reference key="26">
    <citation type="journal article" date="2011" name="Mol. Cell">
        <title>NSD2 links dimethylation of histone H3 at lysine 36 to oncogenic programming.</title>
        <authorList>
            <person name="Kuo A.J."/>
            <person name="Cheung P."/>
            <person name="Chen K."/>
            <person name="Zee B.M."/>
            <person name="Kioi M."/>
            <person name="Lauring J."/>
            <person name="Xi Y."/>
            <person name="Park B.H."/>
            <person name="Shi X."/>
            <person name="Garcia B.A."/>
            <person name="Li W."/>
            <person name="Gozani O."/>
        </authorList>
    </citation>
    <scope>FUNCTION</scope>
    <scope>CATALYTIC ACTIVITY</scope>
    <scope>MUTAGENESIS OF TYR-1092 AND TYR-1179</scope>
</reference>
<reference key="27">
    <citation type="journal article" date="2013" name="J. Proteome Res.">
        <title>Toward a comprehensive characterization of a human cancer cell phosphoproteome.</title>
        <authorList>
            <person name="Zhou H."/>
            <person name="Di Palma S."/>
            <person name="Preisinger C."/>
            <person name="Peng M."/>
            <person name="Polat A.N."/>
            <person name="Heck A.J."/>
            <person name="Mohammed S."/>
        </authorList>
    </citation>
    <scope>PHOSPHORYLATION [LARGE SCALE ANALYSIS] AT THR-110; SER-121; SER-172; THR-422; THR-544 AND SER-614</scope>
    <scope>IDENTIFICATION BY MASS SPECTROMETRY [LARGE SCALE ANALYSIS]</scope>
    <source>
        <tissue>Cervix carcinoma</tissue>
        <tissue>Erythroleukemia</tissue>
    </source>
</reference>
<reference key="28">
    <citation type="journal article" date="2014" name="Mol. Cell. Proteomics">
        <title>Immunoaffinity enrichment and mass spectrometry analysis of protein methylation.</title>
        <authorList>
            <person name="Guo A."/>
            <person name="Gu H."/>
            <person name="Zhou J."/>
            <person name="Mulhern D."/>
            <person name="Wang Y."/>
            <person name="Lee K.A."/>
            <person name="Yang V."/>
            <person name="Aguiar M."/>
            <person name="Kornhauser J."/>
            <person name="Jia X."/>
            <person name="Ren J."/>
            <person name="Beausoleil S.A."/>
            <person name="Silva J.C."/>
            <person name="Vemulapalli V."/>
            <person name="Bedford M.T."/>
            <person name="Comb M.J."/>
        </authorList>
    </citation>
    <scope>IDENTIFICATION BY MASS SPECTROMETRY [LARGE SCALE ANALYSIS]</scope>
    <source>
        <tissue>Colon carcinoma</tissue>
    </source>
</reference>
<reference key="29">
    <citation type="journal article" date="2018" name="J. Hum. Genet.">
        <title>De novo nonsense mutation in WHSC1 (NSD2) in patient with intellectual disability and dysmorphic features.</title>
        <authorList>
            <person name="Lozier E.R."/>
            <person name="Konovalov F.A."/>
            <person name="Kanivets I.V."/>
            <person name="Pyankov D.V."/>
            <person name="Koshkin P.A."/>
            <person name="Baleva L.S."/>
            <person name="Sipyagina A.E."/>
            <person name="Yakusheva E.N."/>
            <person name="Kuchina A.E."/>
            <person name="Korostelev S.A."/>
        </authorList>
    </citation>
    <scope>INVOLVEMENT IN RAUST</scope>
    <scope>VARIANT RAUST 1138-ARG--LYS-1365 DEL</scope>
</reference>
<reference key="30">
    <citation type="journal article" date="2018" name="Nat. Commun.">
        <title>Depletion of Nsd2-mediated histone H3K36 methylation impairs adipose tissue development and function.</title>
        <authorList>
            <person name="Zhuang L."/>
            <person name="Jang Y."/>
            <person name="Park Y.K."/>
            <person name="Lee J.E."/>
            <person name="Jain S."/>
            <person name="Froimchuk E."/>
            <person name="Broun A."/>
            <person name="Liu C."/>
            <person name="Gavrilova O."/>
            <person name="Ge K."/>
        </authorList>
    </citation>
    <scope>FUNCTION</scope>
    <scope>CATALYTIC ACTIVITY</scope>
    <scope>MUTAGENESIS OF TYR-1092; HIS-1142 AND TYR-1179</scope>
</reference>
<reference evidence="37" key="31">
    <citation type="journal article" date="2016" name="ACS Chem. Biol.">
        <title>Structure of the Epigenetic Oncogene MMSET and Inhibition by N-Alkyl Sinefungin Derivatives.</title>
        <authorList>
            <person name="Tisi D."/>
            <person name="Chiarparin E."/>
            <person name="Tamanini E."/>
            <person name="Pathuri P."/>
            <person name="Coyle J.E."/>
            <person name="Hold A."/>
            <person name="Holding F.P."/>
            <person name="Amin N."/>
            <person name="Martin A.C."/>
            <person name="Rich S.J."/>
            <person name="Berdini V."/>
            <person name="Yon J."/>
            <person name="Acklam P."/>
            <person name="Burke R."/>
            <person name="Drouin L."/>
            <person name="Harmer J.E."/>
            <person name="Jeganathan F."/>
            <person name="van Montfort R.L."/>
            <person name="Newbatt Y."/>
            <person name="Tortorici M."/>
            <person name="Westlake M."/>
            <person name="Wood A."/>
            <person name="Hoelder S."/>
            <person name="Heightman T.D."/>
        </authorList>
    </citation>
    <scope>X-RAY CRYSTALLOGRAPHY (2.14 ANGSTROMS) OF 973-1203 IN COMPLEX WITH S-ADENOSYL-L-METHIONINE AND ZINC</scope>
    <scope>FUNCTION</scope>
    <scope>CATALYTIC ACTIVITY</scope>
</reference>
<reference evidence="38 39" key="32">
    <citation type="submission" date="2020-06" db="PDB data bank">
        <title>Histone-lysine N-methyltransferase NSD2-PWWP1 with compound UNC6934.</title>
        <authorList>
            <person name="Zhou M.Q."/>
            <person name="Dong A."/>
            <person name="Ingerman L.A."/>
            <person name="Hanley R.P."/>
            <person name="Bountra C."/>
            <person name="Arrowsmith C.H."/>
            <person name="Edwards A.M."/>
            <person name="Min J."/>
        </authorList>
    </citation>
    <scope>X-RAY CRYSTALLOGRAPHY (1.64 ANGSTROMS) OF 211-350</scope>
</reference>
<reference key="33">
    <citation type="journal article" date="2019" name="Genet. Med.">
        <title>De novo truncating variants in WHSC1 recapitulate the Wolf-Hirschhorn (4p16.3 microdeletion) syndrome phenotype.</title>
        <authorList>
            <person name="Derar N."/>
            <person name="Al-Hassnan Z.N."/>
            <person name="Al-Owain M."/>
            <person name="Monies D."/>
            <person name="Abouelhoda M."/>
            <person name="Meyer B.F."/>
            <person name="Moghrabi N."/>
            <person name="Alkuraya F.S."/>
        </authorList>
    </citation>
    <scope>VARIANT RAUST 935-ARG--LYS-1365 DEL</scope>
</reference>
<reference key="34">
    <citation type="journal article" date="2021" name="Genet. Med.">
        <title>Loss-of-function and missense variants in NSD2 cause decreased methylation activity and are associated with a distinct developmental phenotype.</title>
        <authorList>
            <person name="Zanoni P."/>
            <person name="Steindl K."/>
            <person name="Sengupta D."/>
            <person name="Joset P."/>
            <person name="Bahr A."/>
            <person name="Sticht H."/>
            <person name="Lang-Muritano M."/>
            <person name="van Ravenswaaij-Arts C.M.A."/>
            <person name="Shinawi M."/>
            <person name="Andrews M."/>
            <person name="Attie-Bitach T."/>
            <person name="Maystadt I."/>
            <person name="Belnap N."/>
            <person name="Benoit V."/>
            <person name="Delplancq G."/>
            <person name="de Vries B.B.A."/>
            <person name="Grotto S."/>
            <person name="Lacombe D."/>
            <person name="Larson A."/>
            <person name="Mourmans J."/>
            <person name="Ounap K."/>
            <person name="Petrilli G."/>
            <person name="Pfundt R."/>
            <person name="Ramsey K."/>
            <person name="Blok L.S."/>
            <person name="Tsatsaris V."/>
            <person name="Vitobello A."/>
            <person name="Faivre L."/>
            <person name="Wheeler P.G."/>
            <person name="Wevers M.R."/>
            <person name="Wojcik M."/>
            <person name="Zweier M."/>
            <person name="Gozani O."/>
            <person name="Rauch A."/>
        </authorList>
    </citation>
    <scope>VARIANTS RAUST 600-ARG--LYS-1365 DEL; 720-CYS--LYS-1365 DEL; 755-ARG--LYS-1365 DEL; TYR-869; LEU-895; ARG-1019; LYS-1091 AND PHE-1137</scope>
    <scope>CHARACTERIZATION OF VARIANTS RAUST TYR-869; LEU-895; ARG-1019 AND PHE-1137</scope>
    <scope>FUNCTION</scope>
</reference>
<sequence>MEFSIKQSPLSVQSVVKCIKMKQAPEILGSANGKTPSCEVNRECSVFLSKAQLSSSLQEGVMQKFNGHDALPFIPADKLKDLTSRVFNGEPGAHDAKLRFESQEMKGIGTPPNTTPIKNGSPEIKLKITKTYMNGKPLFESSICGDSAADVSQSEENGQKPENKARRNRKRSIKYDSLLEQGLVEAALVSKISSPSDKKIPAKKESCPNTGRDKDHLLKYNVGDLVWSKVSGYPWWPCMVSADPLLHSYTKLKGQKKSARQYHVQFFGDAPERAWIFEKSLVAFEGEGQFEKLCQESAKQAPTKAEKIKLLKPISGKLRAQWEMGIVQAEEAASMSVEERKAKFTFLYVGDQLHLNPQVAKEAGIAAESLGEMAESSGVSEEAAENPKSVREECIPMKRRRRAKLCSSAETLESHPDIGKSTPQKTAEADPRRGVGSPPGRKKTTVSMPRSRKGDAASQFLVFCQKHRDEVVAEHPDASGEEIEELLRSQWSLLSEKQRARYNTKFALVAPVQAEEDSGNVNGKKRNHTKRIQDPTEDAEAEDTPRKRLRTDKHSLRKRDTITDKTARTSSYKAMEAASSLKSQAATKNLSDACKPLKKRNRASTAASSALGFSKSSSPSASLTENEVSDSPGDEPSESPYESADETQTEVSVSSKKSERGVTAKKEYVCQLCEKPGSLLLCEGPCCGAFHLACLGLSRRPEGRFTCSECASGIHSCFVCKESKTDVKRCVVTQCGKFYHEACVKKYPLTVFESRGFRCPLHSCVSCHASNPSNPRPSKGKMMRCVRCPVAYHSGDACLAAGCSVIASNSIICTAHFTARKGKRHHAHVNVSWCFVCSKGGSLLCCESCPAAFHPDCLNIEMPDGSWFCNDCRAGKKLHFQDIIWVKLGNYRWWPAEVCHPKNVPPNIQKMKHEIGEFPVFFFGSKDYYWTHQARVFPYMEGDRGSRYQGVRGIGRVFKNALQEAEARFREIKLQREARETQESERKPPPYKHIKVNKPYGKVQIYTADISEIPKCNCKPTDENPCGFDSECLNRMLMFECHPQVCPAGEFCQNQCFTKRQYPETKIIKTDGKGWGLVAKRDIRKGEFVNEYVGELIDEEECMARIKHAHENDITHFYMLTIDKDRIIDAGPKGNYSRFMNHSCQPNCETLKWTVNGDTRVGLFAVCDIPAGTELTFNYNLDCLGNEKTVCRCGASNCSGFLGDRPKTSTTLSSEEKGKKTKKKTRRRRAKGEGKRQSEDECFRCGDGGQLVLCDRKFCTKAYHLSCLGLGKRPFGKWECPWHHCDVCGKPSTSFCHLCPNSFCKEHQDGTAFSCTPDGRSYCCEHDLGAASVRSTKTEKPPPEPGKPKGKRRRRRGWRRVTEGK</sequence>
<accession>O96028</accession>
<accession>A2A2T2</accession>
<accession>A2A2T3</accession>
<accession>A2A2T4</accession>
<accession>A7MCZ1</accession>
<accession>D3DVQ2</accession>
<accession>O96031</accession>
<accession>Q4VBY8</accession>
<accession>Q672J1</accession>
<accession>Q6IS00</accession>
<accession>Q86V01</accession>
<accession>Q9BZB4</accession>
<accession>Q9UI92</accession>
<accession>Q9UPR2</accession>
<proteinExistence type="evidence at protein level"/>
<dbReference type="EC" id="2.1.1.357" evidence="19 20 21 22"/>
<dbReference type="EMBL" id="AF071593">
    <property type="protein sequence ID" value="AAC24150.1"/>
    <property type="molecule type" value="mRNA"/>
</dbReference>
<dbReference type="EMBL" id="AF071594">
    <property type="protein sequence ID" value="AAC24151.1"/>
    <property type="molecule type" value="mRNA"/>
</dbReference>
<dbReference type="EMBL" id="AF083386">
    <property type="protein sequence ID" value="AAD19343.1"/>
    <property type="molecule type" value="mRNA"/>
</dbReference>
<dbReference type="EMBL" id="AF083387">
    <property type="protein sequence ID" value="AAD21770.1"/>
    <property type="molecule type" value="mRNA"/>
</dbReference>
<dbReference type="EMBL" id="AF083388">
    <property type="protein sequence ID" value="AAD21771.1"/>
    <property type="molecule type" value="mRNA"/>
</dbReference>
<dbReference type="EMBL" id="AF083389">
    <property type="protein sequence ID" value="AAD19344.1"/>
    <property type="molecule type" value="mRNA"/>
</dbReference>
<dbReference type="EMBL" id="AF083390">
    <property type="protein sequence ID" value="AAD19345.1"/>
    <property type="molecule type" value="mRNA"/>
</dbReference>
<dbReference type="EMBL" id="AF083391">
    <property type="protein sequence ID" value="AAD19346.1"/>
    <property type="molecule type" value="mRNA"/>
</dbReference>
<dbReference type="EMBL" id="AF178206">
    <property type="protein sequence ID" value="AAF23369.1"/>
    <property type="molecule type" value="Genomic_DNA"/>
</dbReference>
<dbReference type="EMBL" id="AF178199">
    <property type="protein sequence ID" value="AAF23369.1"/>
    <property type="status" value="JOINED"/>
    <property type="molecule type" value="Genomic_DNA"/>
</dbReference>
<dbReference type="EMBL" id="AF178198">
    <property type="protein sequence ID" value="AAF23369.1"/>
    <property type="status" value="JOINED"/>
    <property type="molecule type" value="Genomic_DNA"/>
</dbReference>
<dbReference type="EMBL" id="AF178202">
    <property type="protein sequence ID" value="AAF23369.1"/>
    <property type="status" value="JOINED"/>
    <property type="molecule type" value="Genomic_DNA"/>
</dbReference>
<dbReference type="EMBL" id="AF178204">
    <property type="protein sequence ID" value="AAF23369.1"/>
    <property type="status" value="JOINED"/>
    <property type="molecule type" value="Genomic_DNA"/>
</dbReference>
<dbReference type="EMBL" id="AF178205">
    <property type="protein sequence ID" value="AAF23369.1"/>
    <property type="status" value="JOINED"/>
    <property type="molecule type" value="Genomic_DNA"/>
</dbReference>
<dbReference type="EMBL" id="AF178203">
    <property type="protein sequence ID" value="AAF23369.1"/>
    <property type="status" value="JOINED"/>
    <property type="molecule type" value="Genomic_DNA"/>
</dbReference>
<dbReference type="EMBL" id="AF178201">
    <property type="protein sequence ID" value="AAF23369.1"/>
    <property type="status" value="JOINED"/>
    <property type="molecule type" value="Genomic_DNA"/>
</dbReference>
<dbReference type="EMBL" id="AF178200">
    <property type="protein sequence ID" value="AAF23369.1"/>
    <property type="status" value="JOINED"/>
    <property type="molecule type" value="Genomic_DNA"/>
</dbReference>
<dbReference type="EMBL" id="AF178219">
    <property type="protein sequence ID" value="AAF23370.1"/>
    <property type="molecule type" value="Genomic_DNA"/>
</dbReference>
<dbReference type="EMBL" id="AF178198">
    <property type="protein sequence ID" value="AAF23370.1"/>
    <property type="status" value="JOINED"/>
    <property type="molecule type" value="Genomic_DNA"/>
</dbReference>
<dbReference type="EMBL" id="AF178199">
    <property type="protein sequence ID" value="AAF23370.1"/>
    <property type="status" value="JOINED"/>
    <property type="molecule type" value="Genomic_DNA"/>
</dbReference>
<dbReference type="EMBL" id="AF178200">
    <property type="protein sequence ID" value="AAF23370.1"/>
    <property type="status" value="JOINED"/>
    <property type="molecule type" value="Genomic_DNA"/>
</dbReference>
<dbReference type="EMBL" id="AF178202">
    <property type="protein sequence ID" value="AAF23370.1"/>
    <property type="status" value="JOINED"/>
    <property type="molecule type" value="Genomic_DNA"/>
</dbReference>
<dbReference type="EMBL" id="AF178204">
    <property type="protein sequence ID" value="AAF23370.1"/>
    <property type="status" value="JOINED"/>
    <property type="molecule type" value="Genomic_DNA"/>
</dbReference>
<dbReference type="EMBL" id="AF178207">
    <property type="protein sequence ID" value="AAF23370.1"/>
    <property type="status" value="JOINED"/>
    <property type="molecule type" value="Genomic_DNA"/>
</dbReference>
<dbReference type="EMBL" id="AF178216">
    <property type="protein sequence ID" value="AAF23370.1"/>
    <property type="status" value="JOINED"/>
    <property type="molecule type" value="Genomic_DNA"/>
</dbReference>
<dbReference type="EMBL" id="AF178215">
    <property type="protein sequence ID" value="AAF23370.1"/>
    <property type="status" value="JOINED"/>
    <property type="molecule type" value="Genomic_DNA"/>
</dbReference>
<dbReference type="EMBL" id="AF178214">
    <property type="protein sequence ID" value="AAF23370.1"/>
    <property type="status" value="JOINED"/>
    <property type="molecule type" value="Genomic_DNA"/>
</dbReference>
<dbReference type="EMBL" id="AF178213">
    <property type="protein sequence ID" value="AAF23370.1"/>
    <property type="status" value="JOINED"/>
    <property type="molecule type" value="Genomic_DNA"/>
</dbReference>
<dbReference type="EMBL" id="AF178212">
    <property type="protein sequence ID" value="AAF23370.1"/>
    <property type="status" value="JOINED"/>
    <property type="molecule type" value="Genomic_DNA"/>
</dbReference>
<dbReference type="EMBL" id="AF178211">
    <property type="protein sequence ID" value="AAF23370.1"/>
    <property type="status" value="JOINED"/>
    <property type="molecule type" value="Genomic_DNA"/>
</dbReference>
<dbReference type="EMBL" id="AF178210">
    <property type="protein sequence ID" value="AAF23370.1"/>
    <property type="status" value="JOINED"/>
    <property type="molecule type" value="Genomic_DNA"/>
</dbReference>
<dbReference type="EMBL" id="AF178209">
    <property type="protein sequence ID" value="AAF23370.1"/>
    <property type="status" value="JOINED"/>
    <property type="molecule type" value="Genomic_DNA"/>
</dbReference>
<dbReference type="EMBL" id="AF178208">
    <property type="protein sequence ID" value="AAF23370.1"/>
    <property type="status" value="JOINED"/>
    <property type="molecule type" value="Genomic_DNA"/>
</dbReference>
<dbReference type="EMBL" id="AF178218">
    <property type="protein sequence ID" value="AAF23370.1"/>
    <property type="status" value="JOINED"/>
    <property type="molecule type" value="Genomic_DNA"/>
</dbReference>
<dbReference type="EMBL" id="AF178217">
    <property type="protein sequence ID" value="AAF23370.1"/>
    <property type="status" value="JOINED"/>
    <property type="molecule type" value="Genomic_DNA"/>
</dbReference>
<dbReference type="EMBL" id="AF178205">
    <property type="protein sequence ID" value="AAF23370.1"/>
    <property type="status" value="JOINED"/>
    <property type="molecule type" value="Genomic_DNA"/>
</dbReference>
<dbReference type="EMBL" id="AF178203">
    <property type="protein sequence ID" value="AAF23370.1"/>
    <property type="status" value="JOINED"/>
    <property type="molecule type" value="Genomic_DNA"/>
</dbReference>
<dbReference type="EMBL" id="AF178201">
    <property type="protein sequence ID" value="AAF23370.1"/>
    <property type="status" value="JOINED"/>
    <property type="molecule type" value="Genomic_DNA"/>
</dbReference>
<dbReference type="EMBL" id="AF330040">
    <property type="protein sequence ID" value="AAK00344.1"/>
    <property type="molecule type" value="mRNA"/>
</dbReference>
<dbReference type="EMBL" id="AY694128">
    <property type="protein sequence ID" value="AAU09264.1"/>
    <property type="molecule type" value="mRNA"/>
</dbReference>
<dbReference type="EMBL" id="AJ007042">
    <property type="protein sequence ID" value="CAB45386.1"/>
    <property type="molecule type" value="mRNA"/>
</dbReference>
<dbReference type="EMBL" id="AB029013">
    <property type="protein sequence ID" value="BAA83042.2"/>
    <property type="status" value="ALT_INIT"/>
    <property type="molecule type" value="mRNA"/>
</dbReference>
<dbReference type="EMBL" id="AK289697">
    <property type="protein sequence ID" value="BAF82386.1"/>
    <property type="molecule type" value="mRNA"/>
</dbReference>
<dbReference type="EMBL" id="AC105448">
    <property type="status" value="NOT_ANNOTATED_CDS"/>
    <property type="molecule type" value="Genomic_DNA"/>
</dbReference>
<dbReference type="EMBL" id="AL132868">
    <property type="status" value="NOT_ANNOTATED_CDS"/>
    <property type="molecule type" value="Genomic_DNA"/>
</dbReference>
<dbReference type="EMBL" id="CH471131">
    <property type="protein sequence ID" value="EAW82548.1"/>
    <property type="molecule type" value="Genomic_DNA"/>
</dbReference>
<dbReference type="EMBL" id="CH471131">
    <property type="protein sequence ID" value="EAW82552.1"/>
    <property type="molecule type" value="Genomic_DNA"/>
</dbReference>
<dbReference type="EMBL" id="CH471131">
    <property type="protein sequence ID" value="EAW82557.1"/>
    <property type="molecule type" value="Genomic_DNA"/>
</dbReference>
<dbReference type="EMBL" id="CH471131">
    <property type="protein sequence ID" value="EAW82553.1"/>
    <property type="molecule type" value="Genomic_DNA"/>
</dbReference>
<dbReference type="EMBL" id="CH471131">
    <property type="protein sequence ID" value="EAW82556.1"/>
    <property type="molecule type" value="Genomic_DNA"/>
</dbReference>
<dbReference type="EMBL" id="BC052254">
    <property type="protein sequence ID" value="AAH52254.1"/>
    <property type="molecule type" value="mRNA"/>
</dbReference>
<dbReference type="EMBL" id="BC070176">
    <property type="protein sequence ID" value="AAH70176.1"/>
    <property type="molecule type" value="mRNA"/>
</dbReference>
<dbReference type="EMBL" id="BC094825">
    <property type="protein sequence ID" value="AAH94825.2"/>
    <property type="molecule type" value="mRNA"/>
</dbReference>
<dbReference type="EMBL" id="BC141815">
    <property type="protein sequence ID" value="AAI41816.1"/>
    <property type="molecule type" value="mRNA"/>
</dbReference>
<dbReference type="EMBL" id="BC152412">
    <property type="protein sequence ID" value="AAI52413.1"/>
    <property type="molecule type" value="mRNA"/>
</dbReference>
<dbReference type="CCDS" id="CCDS3356.1">
    <molecule id="O96028-3"/>
</dbReference>
<dbReference type="CCDS" id="CCDS33940.1">
    <molecule id="O96028-1"/>
</dbReference>
<dbReference type="CCDS" id="CCDS46999.1">
    <molecule id="O96028-5"/>
</dbReference>
<dbReference type="RefSeq" id="NP_001035889.1">
    <molecule id="O96028-1"/>
    <property type="nucleotide sequence ID" value="NM_001042424.3"/>
</dbReference>
<dbReference type="RefSeq" id="NP_015627.1">
    <molecule id="O96028-5"/>
    <property type="nucleotide sequence ID" value="NM_007331.2"/>
</dbReference>
<dbReference type="RefSeq" id="NP_579877.1">
    <molecule id="O96028-1"/>
    <property type="nucleotide sequence ID" value="NM_133330.3"/>
</dbReference>
<dbReference type="RefSeq" id="NP_579878.1">
    <molecule id="O96028-1"/>
    <property type="nucleotide sequence ID" value="NM_133331.3"/>
</dbReference>
<dbReference type="RefSeq" id="NP_579889.1">
    <molecule id="O96028-3"/>
    <property type="nucleotide sequence ID" value="NM_133334.2"/>
</dbReference>
<dbReference type="RefSeq" id="NP_579890.1">
    <molecule id="O96028-1"/>
    <property type="nucleotide sequence ID" value="NM_133335.4"/>
</dbReference>
<dbReference type="RefSeq" id="XP_005248058.1">
    <molecule id="O96028-1"/>
    <property type="nucleotide sequence ID" value="XM_005248001.5"/>
</dbReference>
<dbReference type="RefSeq" id="XP_005248062.1">
    <molecule id="O96028-3"/>
    <property type="nucleotide sequence ID" value="XM_005248005.4"/>
</dbReference>
<dbReference type="RefSeq" id="XP_006713977.1">
    <property type="nucleotide sequence ID" value="XM_006713914.3"/>
</dbReference>
<dbReference type="RefSeq" id="XP_011511859.1">
    <property type="nucleotide sequence ID" value="XM_011513557.2"/>
</dbReference>
<dbReference type="RefSeq" id="XP_011511862.1">
    <molecule id="O96028-4"/>
    <property type="nucleotide sequence ID" value="XM_011513560.3"/>
</dbReference>
<dbReference type="RefSeq" id="XP_016864076.1">
    <property type="nucleotide sequence ID" value="XM_017008587.1"/>
</dbReference>
<dbReference type="RefSeq" id="XP_016864077.1">
    <property type="nucleotide sequence ID" value="XM_017008588.1"/>
</dbReference>
<dbReference type="RefSeq" id="XP_047272093.1">
    <molecule id="O96028-1"/>
    <property type="nucleotide sequence ID" value="XM_047416137.1"/>
</dbReference>
<dbReference type="RefSeq" id="XP_047272094.1">
    <molecule id="O96028-1"/>
    <property type="nucleotide sequence ID" value="XM_047416138.1"/>
</dbReference>
<dbReference type="RefSeq" id="XP_047272095.1">
    <molecule id="O96028-1"/>
    <property type="nucleotide sequence ID" value="XM_047416139.1"/>
</dbReference>
<dbReference type="RefSeq" id="XP_047272100.1">
    <molecule id="O96028-3"/>
    <property type="nucleotide sequence ID" value="XM_047416144.1"/>
</dbReference>
<dbReference type="RefSeq" id="XP_054206773.1">
    <molecule id="O96028-1"/>
    <property type="nucleotide sequence ID" value="XM_054350798.1"/>
</dbReference>
<dbReference type="RefSeq" id="XP_054206774.1">
    <molecule id="O96028-1"/>
    <property type="nucleotide sequence ID" value="XM_054350799.1"/>
</dbReference>
<dbReference type="RefSeq" id="XP_054206775.1">
    <molecule id="O96028-1"/>
    <property type="nucleotide sequence ID" value="XM_054350800.1"/>
</dbReference>
<dbReference type="RefSeq" id="XP_054206776.1">
    <molecule id="O96028-1"/>
    <property type="nucleotide sequence ID" value="XM_054350801.1"/>
</dbReference>
<dbReference type="RefSeq" id="XP_054206782.1">
    <molecule id="O96028-3"/>
    <property type="nucleotide sequence ID" value="XM_054350807.1"/>
</dbReference>
<dbReference type="RefSeq" id="XP_054206783.1">
    <molecule id="O96028-3"/>
    <property type="nucleotide sequence ID" value="XM_054350808.1"/>
</dbReference>
<dbReference type="RefSeq" id="XP_054206784.1">
    <molecule id="O96028-4"/>
    <property type="nucleotide sequence ID" value="XM_054350809.1"/>
</dbReference>
<dbReference type="PDB" id="5LSU">
    <property type="method" value="X-ray"/>
    <property type="resolution" value="2.14 A"/>
    <property type="chains" value="A/B=973-1203"/>
</dbReference>
<dbReference type="PDB" id="5VC8">
    <property type="method" value="X-ray"/>
    <property type="resolution" value="1.80 A"/>
    <property type="chains" value="A/B=211-350"/>
</dbReference>
<dbReference type="PDB" id="6UE6">
    <property type="method" value="X-ray"/>
    <property type="resolution" value="2.40 A"/>
    <property type="chains" value="A/B/C/D/E/F/G/H=211-350"/>
</dbReference>
<dbReference type="PDB" id="6XCG">
    <property type="method" value="X-ray"/>
    <property type="resolution" value="1.64 A"/>
    <property type="chains" value="A/B/C=211-350"/>
</dbReference>
<dbReference type="PDB" id="7CRO">
    <property type="method" value="EM"/>
    <property type="resolution" value="3.75 A"/>
    <property type="chains" value="I=661-1365"/>
</dbReference>
<dbReference type="PDB" id="7E8D">
    <property type="method" value="EM"/>
    <property type="resolution" value="2.80 A"/>
    <property type="chains" value="K=973-1226"/>
</dbReference>
<dbReference type="PDB" id="7LMT">
    <property type="method" value="X-ray"/>
    <property type="resolution" value="2.27 A"/>
    <property type="chains" value="A/B/C/D/E/F/G/H=211-350"/>
</dbReference>
<dbReference type="PDB" id="7MDN">
    <property type="method" value="X-ray"/>
    <property type="resolution" value="2.42 A"/>
    <property type="chains" value="A/B/C/D/E/F/G/H=211-350"/>
</dbReference>
<dbReference type="PDB" id="7VLN">
    <property type="method" value="X-ray"/>
    <property type="resolution" value="3.09 A"/>
    <property type="chains" value="A/B/C=217-348"/>
</dbReference>
<dbReference type="PDB" id="9EXW">
    <property type="method" value="X-ray"/>
    <property type="resolution" value="2.43 A"/>
    <property type="chains" value="A/B=208-368"/>
</dbReference>
<dbReference type="PDB" id="9EXX">
    <property type="method" value="X-ray"/>
    <property type="resolution" value="1.94 A"/>
    <property type="chains" value="A/B=208-368"/>
</dbReference>
<dbReference type="PDB" id="9EXY">
    <property type="method" value="X-ray"/>
    <property type="resolution" value="1.70 A"/>
    <property type="chains" value="A/B=208-368"/>
</dbReference>
<dbReference type="PDB" id="9GBF">
    <property type="method" value="X-ray"/>
    <property type="resolution" value="1.76 A"/>
    <property type="chains" value="A/B=1229-1331"/>
</dbReference>
<dbReference type="PDBsum" id="5LSU"/>
<dbReference type="PDBsum" id="5VC8"/>
<dbReference type="PDBsum" id="6UE6"/>
<dbReference type="PDBsum" id="6XCG"/>
<dbReference type="PDBsum" id="7CRO"/>
<dbReference type="PDBsum" id="7E8D"/>
<dbReference type="PDBsum" id="7LMT"/>
<dbReference type="PDBsum" id="7MDN"/>
<dbReference type="PDBsum" id="7VLN"/>
<dbReference type="PDBsum" id="9EXW"/>
<dbReference type="PDBsum" id="9EXX"/>
<dbReference type="PDBsum" id="9EXY"/>
<dbReference type="PDBsum" id="9GBF"/>
<dbReference type="EMDB" id="EMD-30453"/>
<dbReference type="EMDB" id="EMD-31015"/>
<dbReference type="SMR" id="O96028"/>
<dbReference type="BioGRID" id="113306">
    <property type="interactions" value="273"/>
</dbReference>
<dbReference type="DIP" id="DIP-57224N"/>
<dbReference type="FunCoup" id="O96028">
    <property type="interactions" value="3513"/>
</dbReference>
<dbReference type="IntAct" id="O96028">
    <property type="interactions" value="133"/>
</dbReference>
<dbReference type="MINT" id="O96028"/>
<dbReference type="STRING" id="9606.ENSP00000372351"/>
<dbReference type="BindingDB" id="O96028"/>
<dbReference type="ChEMBL" id="CHEMBL3108645"/>
<dbReference type="GuidetoPHARMACOLOGY" id="3220"/>
<dbReference type="GlyGen" id="O96028">
    <property type="glycosylation" value="4 sites, 1 O-linked glycan (4 sites)"/>
</dbReference>
<dbReference type="iPTMnet" id="O96028"/>
<dbReference type="PhosphoSitePlus" id="O96028"/>
<dbReference type="SwissPalm" id="O96028"/>
<dbReference type="BioMuta" id="NSD2"/>
<dbReference type="jPOST" id="O96028"/>
<dbReference type="MassIVE" id="O96028"/>
<dbReference type="PaxDb" id="9606-ENSP00000372351"/>
<dbReference type="PeptideAtlas" id="O96028"/>
<dbReference type="ProteomicsDB" id="228"/>
<dbReference type="ProteomicsDB" id="51216">
    <molecule id="O96028-1"/>
</dbReference>
<dbReference type="ProteomicsDB" id="51217">
    <molecule id="O96028-2"/>
</dbReference>
<dbReference type="ProteomicsDB" id="51218">
    <molecule id="O96028-3"/>
</dbReference>
<dbReference type="ProteomicsDB" id="51219">
    <molecule id="O96028-4"/>
</dbReference>
<dbReference type="ProteomicsDB" id="51220">
    <molecule id="O96028-5"/>
</dbReference>
<dbReference type="ProteomicsDB" id="51221">
    <molecule id="O96028-6"/>
</dbReference>
<dbReference type="ProteomicsDB" id="51222">
    <molecule id="O96028-7"/>
</dbReference>
<dbReference type="Pumba" id="O96028"/>
<dbReference type="Antibodypedia" id="8608">
    <property type="antibodies" value="191 antibodies from 31 providers"/>
</dbReference>
<dbReference type="DNASU" id="7468"/>
<dbReference type="Ensembl" id="ENST00000312087.10">
    <molecule id="O96028-3"/>
    <property type="protein sequence ID" value="ENSP00000308780.6"/>
    <property type="gene ID" value="ENSG00000109685.19"/>
</dbReference>
<dbReference type="Ensembl" id="ENST00000353275.9">
    <molecule id="O96028-3"/>
    <property type="protein sequence ID" value="ENSP00000329167.5"/>
    <property type="gene ID" value="ENSG00000109685.19"/>
</dbReference>
<dbReference type="Ensembl" id="ENST00000382888.3">
    <molecule id="O96028-2"/>
    <property type="protein sequence ID" value="ENSP00000372344.3"/>
    <property type="gene ID" value="ENSG00000109685.19"/>
</dbReference>
<dbReference type="Ensembl" id="ENST00000382891.9">
    <molecule id="O96028-1"/>
    <property type="protein sequence ID" value="ENSP00000372347.5"/>
    <property type="gene ID" value="ENSG00000109685.19"/>
</dbReference>
<dbReference type="Ensembl" id="ENST00000382892.6">
    <molecule id="O96028-1"/>
    <property type="protein sequence ID" value="ENSP00000372348.2"/>
    <property type="gene ID" value="ENSG00000109685.19"/>
</dbReference>
<dbReference type="Ensembl" id="ENST00000382895.7">
    <molecule id="O96028-1"/>
    <property type="protein sequence ID" value="ENSP00000372351.3"/>
    <property type="gene ID" value="ENSG00000109685.19"/>
</dbReference>
<dbReference type="Ensembl" id="ENST00000398261.6">
    <molecule id="O96028-3"/>
    <property type="protein sequence ID" value="ENSP00000381311.1"/>
    <property type="gene ID" value="ENSG00000109685.19"/>
</dbReference>
<dbReference type="Ensembl" id="ENST00000420906.6">
    <molecule id="O96028-5"/>
    <property type="protein sequence ID" value="ENSP00000399251.2"/>
    <property type="gene ID" value="ENSG00000109685.19"/>
</dbReference>
<dbReference type="Ensembl" id="ENST00000503128.5">
    <molecule id="O96028-3"/>
    <property type="protein sequence ID" value="ENSP00000425761.1"/>
    <property type="gene ID" value="ENSG00000109685.19"/>
</dbReference>
<dbReference type="Ensembl" id="ENST00000508803.6">
    <molecule id="O96028-1"/>
    <property type="protein sequence ID" value="ENSP00000423972.1"/>
    <property type="gene ID" value="ENSG00000109685.19"/>
</dbReference>
<dbReference type="Ensembl" id="ENST00000514045.5">
    <molecule id="O96028-5"/>
    <property type="protein sequence ID" value="ENSP00000421681.1"/>
    <property type="gene ID" value="ENSG00000109685.19"/>
</dbReference>
<dbReference type="Ensembl" id="ENST00000678714.1">
    <molecule id="O96028-7"/>
    <property type="protein sequence ID" value="ENSP00000504221.1"/>
    <property type="gene ID" value="ENSG00000109685.19"/>
</dbReference>
<dbReference type="GeneID" id="7468"/>
<dbReference type="KEGG" id="hsa:7468"/>
<dbReference type="MANE-Select" id="ENST00000508803.6">
    <property type="protein sequence ID" value="ENSP00000423972.1"/>
    <property type="RefSeq nucleotide sequence ID" value="NM_001042424.3"/>
    <property type="RefSeq protein sequence ID" value="NP_001035889.1"/>
</dbReference>
<dbReference type="UCSC" id="uc003gdy.2">
    <molecule id="O96028-1"/>
    <property type="organism name" value="human"/>
</dbReference>
<dbReference type="AGR" id="HGNC:12766"/>
<dbReference type="CTD" id="7468"/>
<dbReference type="DisGeNET" id="7468"/>
<dbReference type="GeneCards" id="NSD2"/>
<dbReference type="HGNC" id="HGNC:12766">
    <property type="gene designation" value="NSD2"/>
</dbReference>
<dbReference type="HPA" id="ENSG00000109685">
    <property type="expression patterns" value="Low tissue specificity"/>
</dbReference>
<dbReference type="MalaCards" id="NSD2"/>
<dbReference type="MIM" id="602952">
    <property type="type" value="gene"/>
</dbReference>
<dbReference type="MIM" id="619695">
    <property type="type" value="phenotype"/>
</dbReference>
<dbReference type="neXtProt" id="NX_O96028"/>
<dbReference type="OpenTargets" id="ENSG00000109685"/>
<dbReference type="Orphanet" id="280">
    <property type="disease" value="Wolf-Hirschhorn syndrome"/>
</dbReference>
<dbReference type="PharmGKB" id="PA37369"/>
<dbReference type="VEuPathDB" id="HostDB:ENSG00000109685"/>
<dbReference type="eggNOG" id="KOG1081">
    <property type="taxonomic scope" value="Eukaryota"/>
</dbReference>
<dbReference type="GeneTree" id="ENSGT00940000157429"/>
<dbReference type="HOGENOM" id="CLU_004494_2_1_1"/>
<dbReference type="InParanoid" id="O96028"/>
<dbReference type="OMA" id="SHIICPA"/>
<dbReference type="OrthoDB" id="422362at2759"/>
<dbReference type="PAN-GO" id="O96028">
    <property type="GO annotations" value="4 GO annotations based on evolutionary models"/>
</dbReference>
<dbReference type="PhylomeDB" id="O96028"/>
<dbReference type="TreeFam" id="TF329088"/>
<dbReference type="BioCyc" id="MetaCyc:HS03249-MONOMER"/>
<dbReference type="BRENDA" id="2.1.1.356">
    <property type="organism ID" value="2681"/>
</dbReference>
<dbReference type="BRENDA" id="2.1.1.357">
    <property type="organism ID" value="2681"/>
</dbReference>
<dbReference type="BRENDA" id="2.1.1.359">
    <property type="organism ID" value="2681"/>
</dbReference>
<dbReference type="PathwayCommons" id="O96028"/>
<dbReference type="Reactome" id="R-HSA-3214841">
    <property type="pathway name" value="PKMTs methylate histone lysines"/>
</dbReference>
<dbReference type="Reactome" id="R-HSA-5693565">
    <property type="pathway name" value="Recruitment and ATM-mediated phosphorylation of repair and signaling proteins at DNA double strand breaks"/>
</dbReference>
<dbReference type="Reactome" id="R-HSA-5693571">
    <property type="pathway name" value="Nonhomologous End-Joining (NHEJ)"/>
</dbReference>
<dbReference type="Reactome" id="R-HSA-5693607">
    <property type="pathway name" value="Processing of DNA double-strand break ends"/>
</dbReference>
<dbReference type="Reactome" id="R-HSA-69473">
    <property type="pathway name" value="G2/M DNA damage checkpoint"/>
</dbReference>
<dbReference type="SignaLink" id="O96028"/>
<dbReference type="SIGNOR" id="O96028"/>
<dbReference type="BioGRID-ORCS" id="7468">
    <property type="hits" value="38 hits in 1196 CRISPR screens"/>
</dbReference>
<dbReference type="CD-CODE" id="FA66C19F">
    <property type="entry name" value="Synthetic Condensate 000280"/>
</dbReference>
<dbReference type="ChiTaRS" id="WHSC1">
    <property type="organism name" value="human"/>
</dbReference>
<dbReference type="GeneWiki" id="WHSC1"/>
<dbReference type="GenomeRNAi" id="7468"/>
<dbReference type="Pharos" id="O96028">
    <property type="development level" value="Tchem"/>
</dbReference>
<dbReference type="PRO" id="PR:O96028"/>
<dbReference type="Proteomes" id="UP000005640">
    <property type="component" value="Chromosome 4"/>
</dbReference>
<dbReference type="RNAct" id="O96028">
    <property type="molecule type" value="protein"/>
</dbReference>
<dbReference type="Bgee" id="ENSG00000109685">
    <property type="expression patterns" value="Expressed in ventricular zone and 197 other cell types or tissues"/>
</dbReference>
<dbReference type="ExpressionAtlas" id="O96028">
    <property type="expression patterns" value="baseline and differential"/>
</dbReference>
<dbReference type="GO" id="GO:0000785">
    <property type="term" value="C:chromatin"/>
    <property type="evidence" value="ECO:0000318"/>
    <property type="project" value="GO_Central"/>
</dbReference>
<dbReference type="GO" id="GO:0005737">
    <property type="term" value="C:cytoplasm"/>
    <property type="evidence" value="ECO:0007669"/>
    <property type="project" value="UniProtKB-SubCell"/>
</dbReference>
<dbReference type="GO" id="GO:0005730">
    <property type="term" value="C:nucleolus"/>
    <property type="evidence" value="ECO:0000314"/>
    <property type="project" value="HPA"/>
</dbReference>
<dbReference type="GO" id="GO:0005654">
    <property type="term" value="C:nucleoplasm"/>
    <property type="evidence" value="ECO:0000314"/>
    <property type="project" value="HPA"/>
</dbReference>
<dbReference type="GO" id="GO:0005634">
    <property type="term" value="C:nucleus"/>
    <property type="evidence" value="ECO:0000318"/>
    <property type="project" value="GO_Central"/>
</dbReference>
<dbReference type="GO" id="GO:0003682">
    <property type="term" value="F:chromatin binding"/>
    <property type="evidence" value="ECO:0007669"/>
    <property type="project" value="Ensembl"/>
</dbReference>
<dbReference type="GO" id="GO:0140938">
    <property type="term" value="F:histone H3 methyltransferase activity"/>
    <property type="evidence" value="ECO:0000304"/>
    <property type="project" value="Reactome"/>
</dbReference>
<dbReference type="GO" id="GO:0140954">
    <property type="term" value="F:histone H3K36 dimethyltransferase activity"/>
    <property type="evidence" value="ECO:0007669"/>
    <property type="project" value="UniProtKB-EC"/>
</dbReference>
<dbReference type="GO" id="GO:0046975">
    <property type="term" value="F:histone H3K36 methyltransferase activity"/>
    <property type="evidence" value="ECO:0000315"/>
    <property type="project" value="UniProtKB"/>
</dbReference>
<dbReference type="GO" id="GO:0140955">
    <property type="term" value="F:histone H3K36 trimethyltransferase activity"/>
    <property type="evidence" value="ECO:0007669"/>
    <property type="project" value="Ensembl"/>
</dbReference>
<dbReference type="GO" id="GO:0042799">
    <property type="term" value="F:histone H4K20 methyltransferase activity"/>
    <property type="evidence" value="ECO:0000304"/>
    <property type="project" value="Reactome"/>
</dbReference>
<dbReference type="GO" id="GO:0043565">
    <property type="term" value="F:sequence-specific DNA binding"/>
    <property type="evidence" value="ECO:0007669"/>
    <property type="project" value="Ensembl"/>
</dbReference>
<dbReference type="GO" id="GO:0008270">
    <property type="term" value="F:zinc ion binding"/>
    <property type="evidence" value="ECO:0007669"/>
    <property type="project" value="UniProtKB-KW"/>
</dbReference>
<dbReference type="GO" id="GO:0003289">
    <property type="term" value="P:atrial septum primum morphogenesis"/>
    <property type="evidence" value="ECO:0007669"/>
    <property type="project" value="Ensembl"/>
</dbReference>
<dbReference type="GO" id="GO:0003290">
    <property type="term" value="P:atrial septum secundum morphogenesis"/>
    <property type="evidence" value="ECO:0007669"/>
    <property type="project" value="Ensembl"/>
</dbReference>
<dbReference type="GO" id="GO:0060348">
    <property type="term" value="P:bone development"/>
    <property type="evidence" value="ECO:0007669"/>
    <property type="project" value="Ensembl"/>
</dbReference>
<dbReference type="GO" id="GO:0006302">
    <property type="term" value="P:double-strand break repair"/>
    <property type="evidence" value="ECO:0000304"/>
    <property type="project" value="Reactome"/>
</dbReference>
<dbReference type="GO" id="GO:0003149">
    <property type="term" value="P:membranous septum morphogenesis"/>
    <property type="evidence" value="ECO:0007669"/>
    <property type="project" value="Ensembl"/>
</dbReference>
<dbReference type="GO" id="GO:0032259">
    <property type="term" value="P:methylation"/>
    <property type="evidence" value="ECO:0007669"/>
    <property type="project" value="UniProtKB-KW"/>
</dbReference>
<dbReference type="GO" id="GO:0000122">
    <property type="term" value="P:negative regulation of transcription by RNA polymerase II"/>
    <property type="evidence" value="ECO:0007669"/>
    <property type="project" value="Ensembl"/>
</dbReference>
<dbReference type="GO" id="GO:0048298">
    <property type="term" value="P:positive regulation of isotype switching to IgA isotypes"/>
    <property type="evidence" value="ECO:0007669"/>
    <property type="project" value="Ensembl"/>
</dbReference>
<dbReference type="GO" id="GO:0006355">
    <property type="term" value="P:regulation of DNA-templated transcription"/>
    <property type="evidence" value="ECO:0000318"/>
    <property type="project" value="GO_Central"/>
</dbReference>
<dbReference type="GO" id="GO:2001032">
    <property type="term" value="P:regulation of double-strand break repair via nonhomologous end joining"/>
    <property type="evidence" value="ECO:0007669"/>
    <property type="project" value="Ensembl"/>
</dbReference>
<dbReference type="GO" id="GO:0070201">
    <property type="term" value="P:regulation of establishment of protein localization"/>
    <property type="evidence" value="ECO:0007669"/>
    <property type="project" value="Ensembl"/>
</dbReference>
<dbReference type="CDD" id="cd21991">
    <property type="entry name" value="HMG-box_NSD2"/>
    <property type="match status" value="1"/>
</dbReference>
<dbReference type="CDD" id="cd15648">
    <property type="entry name" value="PHD1_NSD1_2"/>
    <property type="match status" value="1"/>
</dbReference>
<dbReference type="CDD" id="cd15651">
    <property type="entry name" value="PHD2_NSD2"/>
    <property type="match status" value="1"/>
</dbReference>
<dbReference type="CDD" id="cd15654">
    <property type="entry name" value="PHD3_NSD2"/>
    <property type="match status" value="1"/>
</dbReference>
<dbReference type="CDD" id="cd15660">
    <property type="entry name" value="PHD5_NSD2"/>
    <property type="match status" value="1"/>
</dbReference>
<dbReference type="CDD" id="cd20162">
    <property type="entry name" value="PWWP_NSD2_rpt1"/>
    <property type="match status" value="1"/>
</dbReference>
<dbReference type="CDD" id="cd20165">
    <property type="entry name" value="PWWP_NSD2_rpt2"/>
    <property type="match status" value="1"/>
</dbReference>
<dbReference type="CDD" id="cd19211">
    <property type="entry name" value="SET_NSD2"/>
    <property type="match status" value="1"/>
</dbReference>
<dbReference type="FunFam" id="2.170.270.10:FF:000002">
    <property type="entry name" value="Histone-lysine N-methyltransferase"/>
    <property type="match status" value="1"/>
</dbReference>
<dbReference type="FunFam" id="2.30.30.140:FF:000004">
    <property type="entry name" value="Histone-lysine N-methyltransferase"/>
    <property type="match status" value="1"/>
</dbReference>
<dbReference type="FunFam" id="3.30.40.10:FF:000025">
    <property type="entry name" value="Histone-lysine N-methyltransferase"/>
    <property type="match status" value="1"/>
</dbReference>
<dbReference type="FunFam" id="3.30.40.10:FF:000093">
    <property type="entry name" value="Histone-lysine N-methyltransferase"/>
    <property type="match status" value="1"/>
</dbReference>
<dbReference type="FunFam" id="3.30.40.10:FF:001229">
    <property type="entry name" value="Histone-lysine N-methyltransferase"/>
    <property type="match status" value="1"/>
</dbReference>
<dbReference type="FunFam" id="1.10.30.10:FF:000024">
    <property type="entry name" value="Histone-lysine N-methyltransferase NSD2"/>
    <property type="match status" value="1"/>
</dbReference>
<dbReference type="FunFam" id="2.30.30.140:FF:000057">
    <property type="entry name" value="Histone-lysine N-methyltransferase NSD2"/>
    <property type="match status" value="1"/>
</dbReference>
<dbReference type="FunFam" id="3.30.40.10:FF:000153">
    <property type="entry name" value="Histone-lysine N-methyltransferase NSD2"/>
    <property type="match status" value="1"/>
</dbReference>
<dbReference type="Gene3D" id="2.30.30.140">
    <property type="match status" value="2"/>
</dbReference>
<dbReference type="Gene3D" id="1.10.30.10">
    <property type="entry name" value="High mobility group box domain"/>
    <property type="match status" value="1"/>
</dbReference>
<dbReference type="Gene3D" id="2.170.270.10">
    <property type="entry name" value="SET domain"/>
    <property type="match status" value="1"/>
</dbReference>
<dbReference type="Gene3D" id="3.30.40.10">
    <property type="entry name" value="Zinc/RING finger domain, C3HC4 (zinc finger)"/>
    <property type="match status" value="4"/>
</dbReference>
<dbReference type="InterPro" id="IPR006560">
    <property type="entry name" value="AWS_dom"/>
</dbReference>
<dbReference type="InterPro" id="IPR041306">
    <property type="entry name" value="C5HCH"/>
</dbReference>
<dbReference type="InterPro" id="IPR047443">
    <property type="entry name" value="HMG-box_NSD2"/>
</dbReference>
<dbReference type="InterPro" id="IPR009071">
    <property type="entry name" value="HMG_box_dom"/>
</dbReference>
<dbReference type="InterPro" id="IPR036910">
    <property type="entry name" value="HMG_box_dom_sf"/>
</dbReference>
<dbReference type="InterPro" id="IPR055198">
    <property type="entry name" value="NSD_PHD"/>
</dbReference>
<dbReference type="InterPro" id="IPR047426">
    <property type="entry name" value="PHD1_NSD1_2"/>
</dbReference>
<dbReference type="InterPro" id="IPR047439">
    <property type="entry name" value="PHD2_NSD2"/>
</dbReference>
<dbReference type="InterPro" id="IPR047441">
    <property type="entry name" value="PHD3_NSD2"/>
</dbReference>
<dbReference type="InterPro" id="IPR047442">
    <property type="entry name" value="PHD5_NSD2"/>
</dbReference>
<dbReference type="InterPro" id="IPR055197">
    <property type="entry name" value="PHDvar_NSD"/>
</dbReference>
<dbReference type="InterPro" id="IPR003616">
    <property type="entry name" value="Post-SET_dom"/>
</dbReference>
<dbReference type="InterPro" id="IPR000313">
    <property type="entry name" value="PWWP_dom"/>
</dbReference>
<dbReference type="InterPro" id="IPR047434">
    <property type="entry name" value="PWWP_NSD2_rpt1"/>
</dbReference>
<dbReference type="InterPro" id="IPR047435">
    <property type="entry name" value="PWWP_NSD2_rpt2"/>
</dbReference>
<dbReference type="InterPro" id="IPR050777">
    <property type="entry name" value="SET2_Histone-Lys_MeTrsfase"/>
</dbReference>
<dbReference type="InterPro" id="IPR001214">
    <property type="entry name" value="SET_dom"/>
</dbReference>
<dbReference type="InterPro" id="IPR046341">
    <property type="entry name" value="SET_dom_sf"/>
</dbReference>
<dbReference type="InterPro" id="IPR047437">
    <property type="entry name" value="SET_NSD2"/>
</dbReference>
<dbReference type="InterPro" id="IPR019786">
    <property type="entry name" value="Zinc_finger_PHD-type_CS"/>
</dbReference>
<dbReference type="InterPro" id="IPR011011">
    <property type="entry name" value="Znf_FYVE_PHD"/>
</dbReference>
<dbReference type="InterPro" id="IPR001965">
    <property type="entry name" value="Znf_PHD"/>
</dbReference>
<dbReference type="InterPro" id="IPR019787">
    <property type="entry name" value="Znf_PHD-finger"/>
</dbReference>
<dbReference type="InterPro" id="IPR001841">
    <property type="entry name" value="Znf_RING"/>
</dbReference>
<dbReference type="InterPro" id="IPR013083">
    <property type="entry name" value="Znf_RING/FYVE/PHD"/>
</dbReference>
<dbReference type="PANTHER" id="PTHR22884">
    <property type="entry name" value="SET DOMAIN PROTEINS"/>
    <property type="match status" value="1"/>
</dbReference>
<dbReference type="Pfam" id="PF17907">
    <property type="entry name" value="AWS"/>
    <property type="match status" value="1"/>
</dbReference>
<dbReference type="Pfam" id="PF17982">
    <property type="entry name" value="C5HCH"/>
    <property type="match status" value="1"/>
</dbReference>
<dbReference type="Pfam" id="PF00505">
    <property type="entry name" value="HMG_box"/>
    <property type="match status" value="1"/>
</dbReference>
<dbReference type="Pfam" id="PF00628">
    <property type="entry name" value="PHD"/>
    <property type="match status" value="1"/>
</dbReference>
<dbReference type="Pfam" id="PF23011">
    <property type="entry name" value="PHD-1st_NSD"/>
    <property type="match status" value="2"/>
</dbReference>
<dbReference type="Pfam" id="PF22908">
    <property type="entry name" value="PHD_NSD"/>
    <property type="match status" value="1"/>
</dbReference>
<dbReference type="Pfam" id="PF23004">
    <property type="entry name" value="PHDvar_NSD"/>
    <property type="match status" value="1"/>
</dbReference>
<dbReference type="Pfam" id="PF00855">
    <property type="entry name" value="PWWP"/>
    <property type="match status" value="2"/>
</dbReference>
<dbReference type="Pfam" id="PF00856">
    <property type="entry name" value="SET"/>
    <property type="match status" value="1"/>
</dbReference>
<dbReference type="SMART" id="SM00570">
    <property type="entry name" value="AWS"/>
    <property type="match status" value="1"/>
</dbReference>
<dbReference type="SMART" id="SM00398">
    <property type="entry name" value="HMG"/>
    <property type="match status" value="1"/>
</dbReference>
<dbReference type="SMART" id="SM00249">
    <property type="entry name" value="PHD"/>
    <property type="match status" value="4"/>
</dbReference>
<dbReference type="SMART" id="SM00508">
    <property type="entry name" value="PostSET"/>
    <property type="match status" value="1"/>
</dbReference>
<dbReference type="SMART" id="SM00293">
    <property type="entry name" value="PWWP"/>
    <property type="match status" value="2"/>
</dbReference>
<dbReference type="SMART" id="SM00184">
    <property type="entry name" value="RING"/>
    <property type="match status" value="2"/>
</dbReference>
<dbReference type="SMART" id="SM00317">
    <property type="entry name" value="SET"/>
    <property type="match status" value="1"/>
</dbReference>
<dbReference type="SUPFAM" id="SSF57903">
    <property type="entry name" value="FYVE/PHD zinc finger"/>
    <property type="match status" value="3"/>
</dbReference>
<dbReference type="SUPFAM" id="SSF47095">
    <property type="entry name" value="HMG-box"/>
    <property type="match status" value="1"/>
</dbReference>
<dbReference type="SUPFAM" id="SSF82199">
    <property type="entry name" value="SET domain"/>
    <property type="match status" value="1"/>
</dbReference>
<dbReference type="SUPFAM" id="SSF63748">
    <property type="entry name" value="Tudor/PWWP/MBT"/>
    <property type="match status" value="2"/>
</dbReference>
<dbReference type="PROSITE" id="PS51215">
    <property type="entry name" value="AWS"/>
    <property type="match status" value="1"/>
</dbReference>
<dbReference type="PROSITE" id="PS50118">
    <property type="entry name" value="HMG_BOX_2"/>
    <property type="match status" value="1"/>
</dbReference>
<dbReference type="PROSITE" id="PS50868">
    <property type="entry name" value="POST_SET"/>
    <property type="match status" value="1"/>
</dbReference>
<dbReference type="PROSITE" id="PS50812">
    <property type="entry name" value="PWWP"/>
    <property type="match status" value="2"/>
</dbReference>
<dbReference type="PROSITE" id="PS50280">
    <property type="entry name" value="SET"/>
    <property type="match status" value="1"/>
</dbReference>
<dbReference type="PROSITE" id="PS01359">
    <property type="entry name" value="ZF_PHD_1"/>
    <property type="match status" value="2"/>
</dbReference>
<dbReference type="PROSITE" id="PS50016">
    <property type="entry name" value="ZF_PHD_2"/>
    <property type="match status" value="2"/>
</dbReference>
<feature type="chain" id="PRO_0000259519" description="Histone-lysine N-methyltransferase NSD2">
    <location>
        <begin position="1"/>
        <end position="1365"/>
    </location>
</feature>
<feature type="domain" description="PWWP 1" evidence="4">
    <location>
        <begin position="222"/>
        <end position="286"/>
    </location>
</feature>
<feature type="domain" description="PWWP 2" evidence="4">
    <location>
        <begin position="880"/>
        <end position="942"/>
    </location>
</feature>
<feature type="domain" description="AWS" evidence="7">
    <location>
        <begin position="1011"/>
        <end position="1061"/>
    </location>
</feature>
<feature type="domain" description="SET" evidence="5">
    <location>
        <begin position="1063"/>
        <end position="1180"/>
    </location>
</feature>
<feature type="domain" description="Post-SET" evidence="3">
    <location>
        <begin position="1187"/>
        <end position="1203"/>
    </location>
</feature>
<feature type="DNA-binding region" description="HMG box" evidence="6">
    <location>
        <begin position="453"/>
        <end position="521"/>
    </location>
</feature>
<feature type="zinc finger region" description="PHD-type 1" evidence="2">
    <location>
        <begin position="667"/>
        <end position="713"/>
    </location>
</feature>
<feature type="zinc finger region" description="PHD-type 2" evidence="2">
    <location>
        <begin position="714"/>
        <end position="770"/>
    </location>
</feature>
<feature type="zinc finger region" description="PHD-type 3" evidence="2">
    <location>
        <begin position="831"/>
        <end position="875"/>
    </location>
</feature>
<feature type="zinc finger region" description="PHD-type 4; atypical" evidence="2">
    <location>
        <begin position="1239"/>
        <end position="1286"/>
    </location>
</feature>
<feature type="region of interest" description="Disordered" evidence="8">
    <location>
        <begin position="149"/>
        <end position="170"/>
    </location>
</feature>
<feature type="region of interest" description="Disordered" evidence="8">
    <location>
        <begin position="376"/>
        <end position="455"/>
    </location>
</feature>
<feature type="region of interest" description="Disordered" evidence="8">
    <location>
        <begin position="516"/>
        <end position="658"/>
    </location>
</feature>
<feature type="region of interest" description="Disordered" evidence="8">
    <location>
        <begin position="1207"/>
        <end position="1232"/>
    </location>
</feature>
<feature type="region of interest" description="Disordered" evidence="8">
    <location>
        <begin position="1333"/>
        <end position="1365"/>
    </location>
</feature>
<feature type="compositionally biased region" description="Basic and acidic residues" evidence="8">
    <location>
        <begin position="552"/>
        <end position="567"/>
    </location>
</feature>
<feature type="compositionally biased region" description="Polar residues" evidence="8">
    <location>
        <begin position="580"/>
        <end position="590"/>
    </location>
</feature>
<feature type="compositionally biased region" description="Low complexity" evidence="8">
    <location>
        <begin position="606"/>
        <end position="622"/>
    </location>
</feature>
<feature type="compositionally biased region" description="Acidic residues" evidence="8">
    <location>
        <begin position="632"/>
        <end position="648"/>
    </location>
</feature>
<feature type="compositionally biased region" description="Basic residues" evidence="8">
    <location>
        <begin position="1219"/>
        <end position="1230"/>
    </location>
</feature>
<feature type="compositionally biased region" description="Basic residues" evidence="8">
    <location>
        <begin position="1348"/>
        <end position="1359"/>
    </location>
</feature>
<feature type="binding site" evidence="21 37">
    <location>
        <position position="1016"/>
    </location>
    <ligand>
        <name>Zn(2+)</name>
        <dbReference type="ChEBI" id="CHEBI:29105"/>
        <label>1</label>
    </ligand>
</feature>
<feature type="binding site" evidence="21 37">
    <location>
        <position position="1018"/>
    </location>
    <ligand>
        <name>Zn(2+)</name>
        <dbReference type="ChEBI" id="CHEBI:29105"/>
        <label>1</label>
    </ligand>
</feature>
<feature type="binding site" evidence="21 37">
    <location>
        <position position="1026"/>
    </location>
    <ligand>
        <name>Zn(2+)</name>
        <dbReference type="ChEBI" id="CHEBI:29105"/>
        <label>1</label>
    </ligand>
</feature>
<feature type="binding site" evidence="21 37">
    <location>
        <position position="1026"/>
    </location>
    <ligand>
        <name>Zn(2+)</name>
        <dbReference type="ChEBI" id="CHEBI:29105"/>
        <label>2</label>
    </ligand>
</feature>
<feature type="binding site" evidence="21 37">
    <location>
        <position position="1032"/>
    </location>
    <ligand>
        <name>Zn(2+)</name>
        <dbReference type="ChEBI" id="CHEBI:29105"/>
        <label>1</label>
    </ligand>
</feature>
<feature type="binding site" evidence="21 37">
    <location>
        <position position="1041"/>
    </location>
    <ligand>
        <name>Zn(2+)</name>
        <dbReference type="ChEBI" id="CHEBI:29105"/>
        <label>2</label>
    </ligand>
</feature>
<feature type="binding site" evidence="21 37">
    <location>
        <position position="1046"/>
    </location>
    <ligand>
        <name>Zn(2+)</name>
        <dbReference type="ChEBI" id="CHEBI:29105"/>
        <label>2</label>
    </ligand>
</feature>
<feature type="binding site" evidence="21 37">
    <location>
        <position position="1052"/>
    </location>
    <ligand>
        <name>Zn(2+)</name>
        <dbReference type="ChEBI" id="CHEBI:29105"/>
        <label>2</label>
    </ligand>
</feature>
<feature type="binding site" evidence="21 37">
    <location>
        <position position="1075"/>
    </location>
    <ligand>
        <name>S-adenosyl-L-methionine</name>
        <dbReference type="ChEBI" id="CHEBI:59789"/>
    </ligand>
</feature>
<feature type="binding site" evidence="21 37">
    <location>
        <begin position="1115"/>
        <end position="1118"/>
    </location>
    <ligand>
        <name>S-adenosyl-L-methionine</name>
        <dbReference type="ChEBI" id="CHEBI:59789"/>
    </ligand>
</feature>
<feature type="binding site" evidence="21 37">
    <location>
        <begin position="1141"/>
        <end position="1142"/>
    </location>
    <ligand>
        <name>S-adenosyl-L-methionine</name>
        <dbReference type="ChEBI" id="CHEBI:59789"/>
    </ligand>
</feature>
<feature type="binding site" evidence="21 37">
    <location>
        <position position="1144"/>
    </location>
    <ligand>
        <name>Zn(2+)</name>
        <dbReference type="ChEBI" id="CHEBI:29105"/>
        <label>3</label>
    </ligand>
</feature>
<feature type="binding site" evidence="21 37">
    <location>
        <position position="1186"/>
    </location>
    <ligand>
        <name>S-adenosyl-L-methionine</name>
        <dbReference type="ChEBI" id="CHEBI:59789"/>
    </ligand>
</feature>
<feature type="binding site" evidence="21 37">
    <location>
        <position position="1191"/>
    </location>
    <ligand>
        <name>Zn(2+)</name>
        <dbReference type="ChEBI" id="CHEBI:29105"/>
        <label>3</label>
    </ligand>
</feature>
<feature type="binding site" evidence="21 37">
    <location>
        <position position="1192"/>
    </location>
    <ligand>
        <name>S-adenosyl-L-methionine</name>
        <dbReference type="ChEBI" id="CHEBI:59789"/>
    </ligand>
</feature>
<feature type="binding site" evidence="21 37">
    <location>
        <position position="1193"/>
    </location>
    <ligand>
        <name>Zn(2+)</name>
        <dbReference type="ChEBI" id="CHEBI:29105"/>
        <label>3</label>
    </ligand>
</feature>
<feature type="binding site" evidence="21 37">
    <location>
        <position position="1198"/>
    </location>
    <ligand>
        <name>Zn(2+)</name>
        <dbReference type="ChEBI" id="CHEBI:29105"/>
        <label>3</label>
    </ligand>
</feature>
<feature type="modified residue" description="Phosphothreonine" evidence="42 44">
    <location>
        <position position="110"/>
    </location>
</feature>
<feature type="modified residue" description="Phosphothreonine" evidence="42">
    <location>
        <position position="114"/>
    </location>
</feature>
<feature type="modified residue" description="Phosphoserine" evidence="41 42 44">
    <location>
        <position position="121"/>
    </location>
</feature>
<feature type="modified residue" description="Phosphoserine" evidence="44">
    <location>
        <position position="172"/>
    </location>
</feature>
<feature type="modified residue" description="Phosphoserine" evidence="42">
    <location>
        <position position="376"/>
    </location>
</feature>
<feature type="modified residue" description="Phosphothreonine" evidence="44">
    <location>
        <position position="422"/>
    </location>
</feature>
<feature type="modified residue" description="Phosphothreonine" evidence="40 41 42 43 44">
    <location>
        <position position="544"/>
    </location>
</feature>
<feature type="modified residue" description="Phosphoserine" evidence="44">
    <location>
        <position position="614"/>
    </location>
</feature>
<feature type="splice variant" id="VSP_021413" description="In isoform 4." evidence="29 31">
    <location>
        <begin position="1"/>
        <end position="781"/>
    </location>
</feature>
<feature type="splice variant" id="VSP_021414" description="In isoform 2." evidence="28 31">
    <location>
        <begin position="1"/>
        <end position="652"/>
    </location>
</feature>
<feature type="splice variant" id="VSP_021415" description="In isoform 7." evidence="32">
    <original>QKKSARQYHVQFFGDAPER</original>
    <variation>IFKSKKFEHLKTSQIVLKD</variation>
    <location>
        <begin position="255"/>
        <end position="273"/>
    </location>
</feature>
<feature type="splice variant" id="VSP_021416" description="In isoform 7." evidence="32">
    <location>
        <begin position="274"/>
        <end position="1365"/>
    </location>
</feature>
<feature type="splice variant" id="VSP_021417" description="In isoform 6." evidence="31">
    <original>VAEHPDASGEEIE</original>
    <variation>STKLCFMLASFRI</variation>
    <location>
        <begin position="472"/>
        <end position="484"/>
    </location>
</feature>
<feature type="splice variant" id="VSP_021418" description="In isoform 6." evidence="31">
    <location>
        <begin position="485"/>
        <end position="1365"/>
    </location>
</feature>
<feature type="splice variant" id="VSP_021419" description="In isoform 3." evidence="30 31 33 34">
    <original>VSDSPGDEPSESPYESADET</original>
    <variation>LLWEPTPVKLDLNPAALYCT</variation>
    <location>
        <begin position="628"/>
        <end position="647"/>
    </location>
</feature>
<feature type="splice variant" id="VSP_021420" description="In isoform 5." evidence="33">
    <original>S</original>
    <variation>K</variation>
    <location>
        <position position="629"/>
    </location>
</feature>
<feature type="splice variant" id="VSP_021421" description="In isoform 5." evidence="33">
    <location>
        <begin position="630"/>
        <end position="1365"/>
    </location>
</feature>
<feature type="splice variant" id="VSP_021422" description="In isoform 3." evidence="30 31 33 34">
    <location>
        <begin position="648"/>
        <end position="1365"/>
    </location>
</feature>
<feature type="splice variant" id="VSP_021423" description="In isoform 2." evidence="28 31">
    <original>VSSKKSERGVTAKKEYVCQLCEKPGSLLLCEGPCCGAFHLACLGLSRRPEGRFTCSECAS</original>
    <variation>MAGSFCWRMLGLVSKVGNRARCFSSMAASEEELLDFSGSELQFNSCSLHLSLHPFFNFLL</variation>
    <location>
        <begin position="653"/>
        <end position="712"/>
    </location>
</feature>
<feature type="sequence variant" id="VAR_086787" description="In RAUST." evidence="25">
    <location>
        <begin position="600"/>
        <end position="1365"/>
    </location>
</feature>
<feature type="sequence variant" id="VAR_086788" description="In RAUST." evidence="25">
    <location>
        <begin position="720"/>
        <end position="1365"/>
    </location>
</feature>
<feature type="sequence variant" id="VAR_086789" description="In RAUST." evidence="25">
    <location>
        <begin position="755"/>
        <end position="1365"/>
    </location>
</feature>
<feature type="sequence variant" id="VAR_086790" description="In RAUST; not changed histone methyltransferase activity H3-K36 specific." evidence="25">
    <original>C</original>
    <variation>Y</variation>
    <location>
        <position position="869"/>
    </location>
</feature>
<feature type="sequence variant" id="VAR_086791" description="In RAUST; decreased histone methyltransferase activity H3-K36 specific." evidence="25">
    <original>P</original>
    <variation>L</variation>
    <location>
        <position position="895"/>
    </location>
</feature>
<feature type="sequence variant" id="VAR_086792" description="In RAUST." evidence="24">
    <location>
        <begin position="935"/>
        <end position="1365"/>
    </location>
</feature>
<feature type="sequence variant" id="VAR_086793" description="In RAUST; decreased histone methyltransferase activity H3-K36 specific." evidence="25">
    <original>K</original>
    <variation>R</variation>
    <location>
        <position position="1019"/>
    </location>
</feature>
<feature type="sequence variant" id="VAR_086794" description="In RAUST." evidence="25">
    <original>E</original>
    <variation>K</variation>
    <location>
        <position position="1091"/>
    </location>
</feature>
<feature type="sequence variant" id="VAR_086795" description="In RAUST; decreased histone methyltransferase activity H3-K36 specific." evidence="25">
    <original>S</original>
    <variation>F</variation>
    <location>
        <position position="1137"/>
    </location>
</feature>
<feature type="sequence variant" id="VAR_086796" description="In RAUST." evidence="23">
    <location>
        <begin position="1138"/>
        <end position="1365"/>
    </location>
</feature>
<feature type="mutagenesis site" description="Loss of methyltransferase activity. Reduces levels of H3K36me2 in preadipocytes; when associated with A-1179." evidence="20 22">
    <original>Y</original>
    <variation>A</variation>
    <location>
        <position position="1092"/>
    </location>
</feature>
<feature type="mutagenesis site" description="Reduces levels of H3K36me2 in preadipocytes; when associated with A-1179." evidence="22">
    <original>H</original>
    <variation>G</variation>
    <location>
        <position position="1142"/>
    </location>
</feature>
<feature type="mutagenesis site" description="Loss of methyltransferase activity. Reduces levels of H3K36me2 in preadipocytes; when associated with A-1092 or G-1142." evidence="20 22">
    <original>Y</original>
    <variation>A</variation>
    <location>
        <position position="1179"/>
    </location>
</feature>
<feature type="sequence conflict" description="In Ref. 5; AAU09264." evidence="35" ref="5">
    <original>T</original>
    <variation>A</variation>
    <location>
        <position position="210"/>
    </location>
</feature>
<feature type="helix" evidence="47">
    <location>
        <begin position="215"/>
        <end position="217"/>
    </location>
</feature>
<feature type="strand" evidence="48">
    <location>
        <begin position="225"/>
        <end position="228"/>
    </location>
</feature>
<feature type="strand" evidence="48">
    <location>
        <begin position="236"/>
        <end position="240"/>
    </location>
</feature>
<feature type="turn" evidence="48">
    <location>
        <begin position="244"/>
        <end position="246"/>
    </location>
</feature>
<feature type="strand" evidence="48">
    <location>
        <begin position="249"/>
        <end position="252"/>
    </location>
</feature>
<feature type="helix" evidence="48">
    <location>
        <begin position="253"/>
        <end position="255"/>
    </location>
</feature>
<feature type="strand" evidence="48">
    <location>
        <begin position="260"/>
        <end position="266"/>
    </location>
</feature>
<feature type="strand" evidence="48">
    <location>
        <begin position="268"/>
        <end position="270"/>
    </location>
</feature>
<feature type="strand" evidence="48">
    <location>
        <begin position="272"/>
        <end position="277"/>
    </location>
</feature>
<feature type="helix" evidence="48">
    <location>
        <begin position="278"/>
        <end position="280"/>
    </location>
</feature>
<feature type="strand" evidence="48">
    <location>
        <begin position="281"/>
        <end position="283"/>
    </location>
</feature>
<feature type="helix" evidence="48">
    <location>
        <begin position="287"/>
        <end position="289"/>
    </location>
</feature>
<feature type="helix" evidence="48">
    <location>
        <begin position="290"/>
        <end position="300"/>
    </location>
</feature>
<feature type="helix" evidence="48">
    <location>
        <begin position="304"/>
        <end position="310"/>
    </location>
</feature>
<feature type="helix" evidence="48">
    <location>
        <begin position="316"/>
        <end position="333"/>
    </location>
</feature>
<feature type="helix" evidence="48">
    <location>
        <begin position="337"/>
        <end position="344"/>
    </location>
</feature>
<feature type="helix" evidence="46">
    <location>
        <begin position="346"/>
        <end position="348"/>
    </location>
</feature>
<feature type="helix" evidence="45">
    <location>
        <begin position="974"/>
        <end position="981"/>
    </location>
</feature>
<feature type="helix" evidence="45">
    <location>
        <begin position="1010"/>
        <end position="1012"/>
    </location>
</feature>
<feature type="strand" evidence="45">
    <location>
        <begin position="1022"/>
        <end position="1024"/>
    </location>
</feature>
<feature type="strand" evidence="49">
    <location>
        <begin position="1028"/>
        <end position="1030"/>
    </location>
</feature>
<feature type="helix" evidence="45">
    <location>
        <begin position="1033"/>
        <end position="1036"/>
    </location>
</feature>
<feature type="turn" evidence="45">
    <location>
        <begin position="1043"/>
        <end position="1045"/>
    </location>
</feature>
<feature type="turn" evidence="45">
    <location>
        <begin position="1047"/>
        <end position="1050"/>
    </location>
</feature>
<feature type="helix" evidence="45">
    <location>
        <begin position="1056"/>
        <end position="1059"/>
    </location>
</feature>
<feature type="strand" evidence="45">
    <location>
        <begin position="1065"/>
        <end position="1069"/>
    </location>
</feature>
<feature type="strand" evidence="45">
    <location>
        <begin position="1071"/>
        <end position="1081"/>
    </location>
</feature>
<feature type="strand" evidence="45">
    <location>
        <begin position="1088"/>
        <end position="1092"/>
    </location>
</feature>
<feature type="strand" evidence="45">
    <location>
        <begin position="1095"/>
        <end position="1097"/>
    </location>
</feature>
<feature type="helix" evidence="45">
    <location>
        <begin position="1099"/>
        <end position="1111"/>
    </location>
</feature>
<feature type="strand" evidence="45">
    <location>
        <begin position="1119"/>
        <end position="1123"/>
    </location>
</feature>
<feature type="strand" evidence="45">
    <location>
        <begin position="1126"/>
        <end position="1129"/>
    </location>
</feature>
<feature type="turn" evidence="45">
    <location>
        <begin position="1130"/>
        <end position="1132"/>
    </location>
</feature>
<feature type="helix" evidence="45">
    <location>
        <begin position="1136"/>
        <end position="1139"/>
    </location>
</feature>
<feature type="strand" evidence="45">
    <location>
        <begin position="1147"/>
        <end position="1155"/>
    </location>
</feature>
<feature type="strand" evidence="45">
    <location>
        <begin position="1158"/>
        <end position="1167"/>
    </location>
</feature>
<feature type="strand" evidence="49">
    <location>
        <begin position="1173"/>
        <end position="1177"/>
    </location>
</feature>
<feature type="helix" evidence="45">
    <location>
        <begin position="1179"/>
        <end position="1181"/>
    </location>
</feature>
<feature type="strand" evidence="45">
    <location>
        <begin position="1183"/>
        <end position="1185"/>
    </location>
</feature>
<feature type="sequence conflict" description="In Ref. 7; BAA83042 and 11; AAI52413." evidence="35" ref="7 11">
    <original>M</original>
    <variation>V</variation>
    <location sequence="O96028-2">
        <position position="26"/>
    </location>
</feature>
<comment type="function">
    <text evidence="1 16 19 20 21 22 25">Histone methyltransferase which specifically dimethylates nucleosomal histone H3 at 'Lys-36' (H3K36me2) (PubMed:19808676, PubMed:22099308, PubMed:27571355, PubMed:29728617, PubMed:33941880). Also monomethylates nucleosomal histone H3 at 'Lys-36' (H3K36me) in vitro (PubMed:22099308). Does not trimethylate nucleosomal histone H3 at 'Lys-36' (H3K36me3) (PubMed:22099308). However, specifically trimethylates histone H3 at 'Lys-36' (H3K36me3) at euchromatic regions in embryonic stem (ES) cells (By similarity). By methylating histone H3 at 'Lys-36', involved in the regulation of gene transcription during various biological processes (PubMed:16115125, PubMed:22099308, PubMed:29728617). In ES cells, associates with developmental transcription factors such as SALL1 and represses inappropriate gene transcription mediated by histone deacetylation (By similarity). During heart development, associates with transcription factor NKX2-5 to repress transcription of NKX2-5 target genes (By similarity). Plays an essential role in adipogenesis, by regulating expression of genes involved in pre-adipocyte differentiation (PubMed:29728617). During T-cell receptor (TCR) and CD28-mediated T-cell activation, promotes the transcription of transcription factor BCL6 which is required for follicular helper T (Tfh) cell differentiation (By similarity). During B-cell development, required for the generation of the B1 lineage (By similarity). During B2 cell activation, may contribute to the control of isotype class switch recombination (CRS), splenic germinal center formation, and the humoral immune response (By similarity). Plays a role in class switch recombination of the immunoglobulin heavy chain (IgH) locus during B-cell activation (By similarity). By regulating the methylation of histone H3 at 'Lys-36' and histone H4 at 'Lys-20' at the IgH locus, involved in TP53BP1 recruitment to the IgH switch region and promotes the transcription of IgA (By similarity).</text>
</comment>
<comment type="function">
    <molecule>Isoform 1</molecule>
    <text evidence="20">Histone methyltransferase which specifically dimethylates nucleosomal histone H3 at 'Lys-36' (H3K36me2).</text>
</comment>
<comment type="function">
    <molecule>Isoform 4</molecule>
    <text evidence="10 18 20">Histone methyltransferase which specifically dimethylates nucleosomal histone H3 at 'Lys-36' (H3K36me2) (PubMed:22099308). Methylation of histone H3 at 'Lys-27' is controversial (PubMed:18172012, PubMed:22099308). Mono-, di- or tri-methylates histone H3 at 'Lys-27' (H3K27me, H3K27me2 and H3K27me3) (PubMed:18172012). Does not methylate histone H3 at 'Lys-27' (PubMed:22099308). May act as a transcription regulator that binds DNA and suppresses IL5 transcription through HDAC recruitment (PubMed:11152655, PubMed:18172012).</text>
</comment>
<comment type="catalytic activity">
    <reaction evidence="19 20">
        <text>L-lysyl(36)-[histone H3] + S-adenosyl-L-methionine = N(6)-methyl-L-lysyl(36)-[histone H3] + S-adenosyl-L-homocysteine + H(+)</text>
        <dbReference type="Rhea" id="RHEA:60312"/>
        <dbReference type="Rhea" id="RHEA-COMP:9785"/>
        <dbReference type="Rhea" id="RHEA-COMP:9786"/>
        <dbReference type="ChEBI" id="CHEBI:15378"/>
        <dbReference type="ChEBI" id="CHEBI:29969"/>
        <dbReference type="ChEBI" id="CHEBI:57856"/>
        <dbReference type="ChEBI" id="CHEBI:59789"/>
        <dbReference type="ChEBI" id="CHEBI:61929"/>
    </reaction>
</comment>
<comment type="catalytic activity">
    <reaction evidence="19 20 21 22">
        <text>L-lysyl(36)-[histone H3] + 2 S-adenosyl-L-methionine = N(6),N(6)-dimethyl-L-lysyl(36)-[histone H3] + 2 S-adenosyl-L-homocysteine + 2 H(+)</text>
        <dbReference type="Rhea" id="RHEA:60308"/>
        <dbReference type="Rhea" id="RHEA-COMP:9785"/>
        <dbReference type="Rhea" id="RHEA-COMP:9787"/>
        <dbReference type="ChEBI" id="CHEBI:15378"/>
        <dbReference type="ChEBI" id="CHEBI:29969"/>
        <dbReference type="ChEBI" id="CHEBI:57856"/>
        <dbReference type="ChEBI" id="CHEBI:59789"/>
        <dbReference type="ChEBI" id="CHEBI:61976"/>
        <dbReference type="EC" id="2.1.1.357"/>
    </reaction>
</comment>
<comment type="subunit">
    <text evidence="1">Interacts with HDAC1. Interacts (via PHD-type zinc fingers 1, 2 and 3) with SALL1. Interacts (via PHD-type 1, 2 and 3) with SALL4. Interacts with NANOG. Interacts with OGT. Interacts (via HMG box) with NKX2-5.</text>
</comment>
<comment type="interaction">
    <interactant intactId="EBI-2693298">
        <id>O96028</id>
    </interactant>
    <interactant intactId="EBI-608057">
        <id>P10275</id>
        <label>AR</label>
    </interactant>
    <organismsDiffer>false</organismsDiffer>
    <experiments>5</experiments>
</comment>
<comment type="interaction">
    <interactant intactId="EBI-2693298">
        <id>O96028</id>
    </interactant>
    <interactant intactId="EBI-13346145">
        <id>Q8N7B1</id>
        <label>HORMAD2</label>
    </interactant>
    <organismsDiffer>false</organismsDiffer>
    <experiments>3</experiments>
</comment>
<comment type="interaction">
    <interactant intactId="EBI-2693298">
        <id>O96028</id>
    </interactant>
    <interactant intactId="EBI-495644">
        <id>Q14676</id>
        <label>MDC1</label>
    </interactant>
    <organismsDiffer>false</organismsDiffer>
    <experiments>3</experiments>
</comment>
<comment type="interaction">
    <interactant intactId="EBI-2693298">
        <id>O96028</id>
    </interactant>
    <interactant intactId="EBI-742388">
        <id>Q9H8W4</id>
        <label>PLEKHF2</label>
    </interactant>
    <organismsDiffer>false</organismsDiffer>
    <experiments>3</experiments>
</comment>
<comment type="interaction">
    <interactant intactId="EBI-15910280">
        <id>O96028-1</id>
    </interactant>
    <interactant intactId="EBI-495644">
        <id>Q14676</id>
        <label>MDC1</label>
    </interactant>
    <organismsDiffer>false</organismsDiffer>
    <experiments>3</experiments>
</comment>
<comment type="subcellular location">
    <subcellularLocation>
        <location evidence="14 17">Nucleus</location>
    </subcellularLocation>
    <subcellularLocation>
        <location evidence="1">Chromosome</location>
    </subcellularLocation>
    <text evidence="1">In embryonic stem (ES) cells, localizes to small foci, probably corresponding to euchromatin (By similarity). In B-cells, localizes to Ig heavy chain switch region during class switch recombination (By similarity).</text>
</comment>
<comment type="subcellular location">
    <molecule>Isoform 1</molecule>
    <subcellularLocation>
        <location evidence="14 17">Nucleus</location>
    </subcellularLocation>
    <subcellularLocation>
        <location evidence="14">Chromosome</location>
    </subcellularLocation>
</comment>
<comment type="subcellular location">
    <molecule>Isoform 3</molecule>
    <subcellularLocation>
        <location evidence="14 17">Nucleus</location>
    </subcellularLocation>
</comment>
<comment type="subcellular location">
    <molecule>Isoform 4</molecule>
    <subcellularLocation>
        <location evidence="14 17">Cytoplasm</location>
    </subcellularLocation>
    <subcellularLocation>
        <location evidence="14 17">Nucleus</location>
        <location evidence="14 17">Nucleolus</location>
    </subcellularLocation>
</comment>
<comment type="alternative products">
    <event type="alternative splicing"/>
    <isoform>
        <id>O96028-1</id>
        <name>1</name>
        <name evidence="34">MMSET type II</name>
        <sequence type="displayed"/>
    </isoform>
    <isoform>
        <id>O96028-2</id>
        <name>2</name>
        <sequence type="described" ref="VSP_021414 VSP_021423"/>
    </isoform>
    <isoform>
        <id>O96028-3</id>
        <name>3</name>
        <name evidence="34">MMSET type I</name>
        <sequence type="described" ref="VSP_021419 VSP_021422"/>
    </isoform>
    <isoform>
        <id>O96028-4</id>
        <name>4</name>
        <name evidence="29">RE-IIBP</name>
        <name evidence="29">IL-5 promoter REII-region-binding protein</name>
        <sequence type="described" ref="VSP_021413"/>
    </isoform>
    <isoform>
        <id>O96028-5</id>
        <name>5</name>
        <sequence type="described" ref="VSP_021420 VSP_021421"/>
    </isoform>
    <isoform>
        <id>O96028-6</id>
        <name>6</name>
        <sequence type="described" ref="VSP_021417 VSP_021418"/>
    </isoform>
    <isoform>
        <id>O96028-7</id>
        <name>7</name>
        <sequence type="described" ref="VSP_021415 VSP_021416"/>
    </isoform>
</comment>
<comment type="tissue specificity">
    <text evidence="18 26 27">Widely expressed (PubMed:18172012, PubMed:9618163). Predominantly expressed in thymus and testis (PubMed:18172012, PubMed:9787135).</text>
</comment>
<comment type="disease" evidence="23 24 25">
    <disease id="DI-06312">
        <name>Rauch-Steindl syndrome</name>
        <acronym>RAUST</acronym>
        <description>An autosomal dominant disorder characterized by poor pre- and postnatal growth, facial dysmorphism, and variable developmental delay with delayed motor and speech acquisition and impaired intellectual. Other features may include hypotonia and behavioral abnormalities.</description>
        <dbReference type="MIM" id="619695"/>
    </disease>
    <text>The disease is caused by variants affecting the gene represented in this entry.</text>
</comment>
<comment type="disease">
    <text evidence="9 11 12 13 26 27">A chromosomal aberration involving NSD2 is a cause of multiple myeloma tumors. Translocation t(4;14)(p16.3;q32.3) with IgH.</text>
</comment>
<comment type="disease">
    <text evidence="15">NSD2 is located in the Wolf-Hirschhorn syndrome (WHS) critical region. WHS results from by sub-telomeric deletions in the short arm of chromosome 4. NSD2 is deleted in every case, however deletion of linked genes contributes to both the severity of the core characteristics and the presence of the additional syndromic problems.</text>
</comment>
<comment type="similarity">
    <text evidence="5">Belongs to the class V-like SAM-binding methyltransferase superfamily. Histone-lysine methyltransferase family. SET2 subfamily.</text>
</comment>
<comment type="caution">
    <text evidence="19 20">Depending on the experimental set up and substrate used, NSD2 has been shown to mono-, di- or tri-methylate 'Lys-27', 'Lys-36' or 'Lys-79' of histone H3 and 'Lys-20' or 'Lys-44' of histone H4 (PubMed:19808676). However, dimethylation of nucleosomal histone H3 at 'Lys-36' (H3K36me2) is likely to be the physiological reaction catalyzed by NSD2 (PubMed:19808676, PubMed:22099308).</text>
</comment>
<comment type="sequence caution" evidence="35">
    <conflict type="erroneous initiation">
        <sequence resource="EMBL-CDS" id="BAA83042"/>
    </conflict>
    <text>Extended N-terminus.</text>
</comment>
<comment type="online information" name="Atlas of Genetics and Cytogenetics in Oncology and Haematology">
    <link uri="https://atlasgeneticsoncology.org/gene/42809/WHSC1"/>
</comment>
<organism>
    <name type="scientific">Homo sapiens</name>
    <name type="common">Human</name>
    <dbReference type="NCBI Taxonomy" id="9606"/>
    <lineage>
        <taxon>Eukaryota</taxon>
        <taxon>Metazoa</taxon>
        <taxon>Chordata</taxon>
        <taxon>Craniata</taxon>
        <taxon>Vertebrata</taxon>
        <taxon>Euteleostomi</taxon>
        <taxon>Mammalia</taxon>
        <taxon>Eutheria</taxon>
        <taxon>Euarchontoglires</taxon>
        <taxon>Primates</taxon>
        <taxon>Haplorrhini</taxon>
        <taxon>Catarrhini</taxon>
        <taxon>Hominidae</taxon>
        <taxon>Homo</taxon>
    </lineage>
</organism>
<evidence type="ECO:0000250" key="1">
    <source>
        <dbReference type="UniProtKB" id="Q8BVE8"/>
    </source>
</evidence>
<evidence type="ECO:0000255" key="2">
    <source>
        <dbReference type="PROSITE-ProRule" id="PRU00146"/>
    </source>
</evidence>
<evidence type="ECO:0000255" key="3">
    <source>
        <dbReference type="PROSITE-ProRule" id="PRU00155"/>
    </source>
</evidence>
<evidence type="ECO:0000255" key="4">
    <source>
        <dbReference type="PROSITE-ProRule" id="PRU00162"/>
    </source>
</evidence>
<evidence type="ECO:0000255" key="5">
    <source>
        <dbReference type="PROSITE-ProRule" id="PRU00190"/>
    </source>
</evidence>
<evidence type="ECO:0000255" key="6">
    <source>
        <dbReference type="PROSITE-ProRule" id="PRU00267"/>
    </source>
</evidence>
<evidence type="ECO:0000255" key="7">
    <source>
        <dbReference type="PROSITE-ProRule" id="PRU00562"/>
    </source>
</evidence>
<evidence type="ECO:0000256" key="8">
    <source>
        <dbReference type="SAM" id="MobiDB-lite"/>
    </source>
</evidence>
<evidence type="ECO:0000269" key="9">
    <source>
    </source>
</evidence>
<evidence type="ECO:0000269" key="10">
    <source>
    </source>
</evidence>
<evidence type="ECO:0000269" key="11">
    <source>
    </source>
</evidence>
<evidence type="ECO:0000269" key="12">
    <source>
    </source>
</evidence>
<evidence type="ECO:0000269" key="13">
    <source>
    </source>
</evidence>
<evidence type="ECO:0000269" key="14">
    <source>
    </source>
</evidence>
<evidence type="ECO:0000269" key="15">
    <source>
    </source>
</evidence>
<evidence type="ECO:0000269" key="16">
    <source>
    </source>
</evidence>
<evidence type="ECO:0000269" key="17">
    <source>
    </source>
</evidence>
<evidence type="ECO:0000269" key="18">
    <source>
    </source>
</evidence>
<evidence type="ECO:0000269" key="19">
    <source>
    </source>
</evidence>
<evidence type="ECO:0000269" key="20">
    <source>
    </source>
</evidence>
<evidence type="ECO:0000269" key="21">
    <source>
    </source>
</evidence>
<evidence type="ECO:0000269" key="22">
    <source>
    </source>
</evidence>
<evidence type="ECO:0000269" key="23">
    <source>
    </source>
</evidence>
<evidence type="ECO:0000269" key="24">
    <source>
    </source>
</evidence>
<evidence type="ECO:0000269" key="25">
    <source>
    </source>
</evidence>
<evidence type="ECO:0000269" key="26">
    <source>
    </source>
</evidence>
<evidence type="ECO:0000269" key="27">
    <source>
    </source>
</evidence>
<evidence type="ECO:0000303" key="28">
    <source>
    </source>
</evidence>
<evidence type="ECO:0000303" key="29">
    <source>
    </source>
</evidence>
<evidence type="ECO:0000303" key="30">
    <source>
    </source>
</evidence>
<evidence type="ECO:0000303" key="31">
    <source>
    </source>
</evidence>
<evidence type="ECO:0000303" key="32">
    <source>
    </source>
</evidence>
<evidence type="ECO:0000303" key="33">
    <source>
    </source>
</evidence>
<evidence type="ECO:0000303" key="34">
    <source>
    </source>
</evidence>
<evidence type="ECO:0000305" key="35"/>
<evidence type="ECO:0000312" key="36">
    <source>
        <dbReference type="HGNC" id="HGNC:12766"/>
    </source>
</evidence>
<evidence type="ECO:0007744" key="37">
    <source>
        <dbReference type="PDB" id="5LSU"/>
    </source>
</evidence>
<evidence type="ECO:0007744" key="38">
    <source>
        <dbReference type="PDB" id="6UE6"/>
    </source>
</evidence>
<evidence type="ECO:0007744" key="39">
    <source>
        <dbReference type="PDB" id="6XCG"/>
    </source>
</evidence>
<evidence type="ECO:0007744" key="40">
    <source>
    </source>
</evidence>
<evidence type="ECO:0007744" key="41">
    <source>
    </source>
</evidence>
<evidence type="ECO:0007744" key="42">
    <source>
    </source>
</evidence>
<evidence type="ECO:0007744" key="43">
    <source>
    </source>
</evidence>
<evidence type="ECO:0007744" key="44">
    <source>
    </source>
</evidence>
<evidence type="ECO:0007829" key="45">
    <source>
        <dbReference type="PDB" id="5LSU"/>
    </source>
</evidence>
<evidence type="ECO:0007829" key="46">
    <source>
        <dbReference type="PDB" id="5VC8"/>
    </source>
</evidence>
<evidence type="ECO:0007829" key="47">
    <source>
        <dbReference type="PDB" id="6UE6"/>
    </source>
</evidence>
<evidence type="ECO:0007829" key="48">
    <source>
        <dbReference type="PDB" id="6XCG"/>
    </source>
</evidence>
<evidence type="ECO:0007829" key="49">
    <source>
        <dbReference type="PDB" id="7E8D"/>
    </source>
</evidence>